<evidence type="ECO:0000250" key="1">
    <source>
        <dbReference type="UniProtKB" id="Q61214"/>
    </source>
</evidence>
<evidence type="ECO:0000250" key="2">
    <source>
        <dbReference type="UniProtKB" id="Q63470"/>
    </source>
</evidence>
<evidence type="ECO:0000255" key="3"/>
<evidence type="ECO:0000255" key="4">
    <source>
        <dbReference type="PROSITE-ProRule" id="PRU00159"/>
    </source>
</evidence>
<evidence type="ECO:0000256" key="5">
    <source>
        <dbReference type="SAM" id="MobiDB-lite"/>
    </source>
</evidence>
<evidence type="ECO:0000269" key="6">
    <source>
    </source>
</evidence>
<evidence type="ECO:0000269" key="7">
    <source>
    </source>
</evidence>
<evidence type="ECO:0000269" key="8">
    <source>
    </source>
</evidence>
<evidence type="ECO:0000269" key="9">
    <source>
    </source>
</evidence>
<evidence type="ECO:0000269" key="10">
    <source>
    </source>
</evidence>
<evidence type="ECO:0000269" key="11">
    <source>
    </source>
</evidence>
<evidence type="ECO:0000269" key="12">
    <source>
    </source>
</evidence>
<evidence type="ECO:0000269" key="13">
    <source>
    </source>
</evidence>
<evidence type="ECO:0000269" key="14">
    <source>
    </source>
</evidence>
<evidence type="ECO:0000269" key="15">
    <source>
    </source>
</evidence>
<evidence type="ECO:0000269" key="16">
    <source>
    </source>
</evidence>
<evidence type="ECO:0000269" key="17">
    <source>
    </source>
</evidence>
<evidence type="ECO:0000269" key="18">
    <source>
    </source>
</evidence>
<evidence type="ECO:0000269" key="19">
    <source>
    </source>
</evidence>
<evidence type="ECO:0000269" key="20">
    <source>
    </source>
</evidence>
<evidence type="ECO:0000269" key="21">
    <source>
    </source>
</evidence>
<evidence type="ECO:0000269" key="22">
    <source>
    </source>
</evidence>
<evidence type="ECO:0000269" key="23">
    <source>
    </source>
</evidence>
<evidence type="ECO:0000269" key="24">
    <source>
    </source>
</evidence>
<evidence type="ECO:0000269" key="25">
    <source>
    </source>
</evidence>
<evidence type="ECO:0000269" key="26">
    <source>
    </source>
</evidence>
<evidence type="ECO:0000269" key="27">
    <source>
    </source>
</evidence>
<evidence type="ECO:0000303" key="28">
    <source>
    </source>
</evidence>
<evidence type="ECO:0000303" key="29">
    <source>
    </source>
</evidence>
<evidence type="ECO:0000303" key="30">
    <source>
    </source>
</evidence>
<evidence type="ECO:0000303" key="31">
    <source>
    </source>
</evidence>
<evidence type="ECO:0000303" key="32">
    <source>
    </source>
</evidence>
<evidence type="ECO:0000303" key="33">
    <source>
    </source>
</evidence>
<evidence type="ECO:0000305" key="34"/>
<evidence type="ECO:0000305" key="35">
    <source>
    </source>
</evidence>
<evidence type="ECO:0000312" key="36">
    <source>
        <dbReference type="HGNC" id="HGNC:3091"/>
    </source>
</evidence>
<evidence type="ECO:0007744" key="37">
    <source>
    </source>
</evidence>
<evidence type="ECO:0007744" key="38">
    <source>
    </source>
</evidence>
<evidence type="ECO:0007744" key="39">
    <source>
    </source>
</evidence>
<evidence type="ECO:0007744" key="40">
    <source>
    </source>
</evidence>
<evidence type="ECO:0007829" key="41">
    <source>
        <dbReference type="PDB" id="4YLK"/>
    </source>
</evidence>
<evidence type="ECO:0007829" key="42">
    <source>
        <dbReference type="PDB" id="6S14"/>
    </source>
</evidence>
<evidence type="ECO:0007829" key="43">
    <source>
        <dbReference type="PDB" id="6S1H"/>
    </source>
</evidence>
<evidence type="ECO:0007829" key="44">
    <source>
        <dbReference type="PDB" id="6S1I"/>
    </source>
</evidence>
<evidence type="ECO:0007829" key="45">
    <source>
        <dbReference type="PDB" id="7A4R"/>
    </source>
</evidence>
<evidence type="ECO:0007829" key="46">
    <source>
        <dbReference type="PDB" id="7A5D"/>
    </source>
</evidence>
<evidence type="ECO:0007829" key="47">
    <source>
        <dbReference type="PDB" id="7AKL"/>
    </source>
</evidence>
<evidence type="ECO:0007829" key="48">
    <source>
        <dbReference type="PDB" id="7O7K"/>
    </source>
</evidence>
<evidence type="ECO:0007829" key="49">
    <source>
        <dbReference type="PDB" id="7OY6"/>
    </source>
</evidence>
<feature type="chain" id="PRO_0000085931" description="Dual specificity tyrosine-phosphorylation-regulated kinase 1A">
    <location>
        <begin position="1"/>
        <end position="763"/>
    </location>
</feature>
<feature type="domain" description="Protein kinase" evidence="4">
    <location>
        <begin position="159"/>
        <end position="479"/>
    </location>
</feature>
<feature type="region of interest" description="Disordered" evidence="5">
    <location>
        <begin position="32"/>
        <end position="57"/>
    </location>
</feature>
<feature type="region of interest" description="Disordered" evidence="5">
    <location>
        <begin position="115"/>
        <end position="136"/>
    </location>
</feature>
<feature type="region of interest" description="Disordered" evidence="5">
    <location>
        <begin position="408"/>
        <end position="442"/>
    </location>
</feature>
<feature type="region of interest" description="Disordered" evidence="5">
    <location>
        <begin position="485"/>
        <end position="540"/>
    </location>
</feature>
<feature type="region of interest" description="Histidine-rich domain (HRD)" evidence="22">
    <location>
        <begin position="595"/>
        <end position="625"/>
    </location>
</feature>
<feature type="region of interest" description="Disordered" evidence="22">
    <location>
        <begin position="596"/>
        <end position="679"/>
    </location>
</feature>
<feature type="region of interest" description="Disordered" evidence="5">
    <location>
        <begin position="744"/>
        <end position="763"/>
    </location>
</feature>
<feature type="short sequence motif" description="Bipartite nuclear localization signal" evidence="3">
    <location>
        <begin position="117"/>
        <end position="134"/>
    </location>
</feature>
<feature type="compositionally biased region" description="Polar residues" evidence="5">
    <location>
        <begin position="46"/>
        <end position="57"/>
    </location>
</feature>
<feature type="compositionally biased region" description="Polar residues" evidence="5">
    <location>
        <begin position="485"/>
        <end position="501"/>
    </location>
</feature>
<feature type="compositionally biased region" description="Low complexity" evidence="5">
    <location>
        <begin position="502"/>
        <end position="525"/>
    </location>
</feature>
<feature type="compositionally biased region" description="Basic residues" evidence="5">
    <location>
        <begin position="598"/>
        <end position="620"/>
    </location>
</feature>
<feature type="compositionally biased region" description="Polar residues" evidence="5">
    <location>
        <begin position="634"/>
        <end position="645"/>
    </location>
</feature>
<feature type="compositionally biased region" description="Low complexity" evidence="5">
    <location>
        <begin position="654"/>
        <end position="672"/>
    </location>
</feature>
<feature type="compositionally biased region" description="Polar residues" evidence="5">
    <location>
        <begin position="754"/>
        <end position="763"/>
    </location>
</feature>
<feature type="active site" description="Proton acceptor" evidence="35">
    <location>
        <position position="287"/>
    </location>
</feature>
<feature type="binding site" evidence="34">
    <location>
        <begin position="165"/>
        <end position="173"/>
    </location>
    <ligand>
        <name>ATP</name>
        <dbReference type="ChEBI" id="CHEBI:30616"/>
    </ligand>
</feature>
<feature type="binding site" evidence="34">
    <location>
        <position position="188"/>
    </location>
    <ligand>
        <name>ATP</name>
        <dbReference type="ChEBI" id="CHEBI:30616"/>
    </ligand>
</feature>
<feature type="binding site" evidence="34">
    <location>
        <begin position="238"/>
        <end position="241"/>
    </location>
    <ligand>
        <name>ATP</name>
        <dbReference type="ChEBI" id="CHEBI:30616"/>
    </ligand>
</feature>
<feature type="modified residue" description="Phosphoserine" evidence="39">
    <location>
        <position position="14"/>
    </location>
</feature>
<feature type="modified residue" description="Phosphotyrosine; by autocatalysis" evidence="18">
    <location>
        <position position="111"/>
    </location>
</feature>
<feature type="modified residue" description="Phosphotyrosine; by autocatalysis" evidence="18">
    <location>
        <position position="140"/>
    </location>
</feature>
<feature type="modified residue" description="Phosphotyrosine" evidence="38 39">
    <location>
        <position position="145"/>
    </location>
</feature>
<feature type="modified residue" description="Phosphotyrosine; by autocatalysis" evidence="18">
    <location>
        <position position="159"/>
    </location>
</feature>
<feature type="modified residue" description="Phosphotyrosine; by autocatalysis" evidence="18">
    <location>
        <position position="177"/>
    </location>
</feature>
<feature type="modified residue" description="Phosphotyrosine; by autocatalysis" evidence="2">
    <location>
        <position position="219"/>
    </location>
</feature>
<feature type="modified residue" description="Phosphoserine; by autocatalysis" evidence="18">
    <location>
        <position position="310"/>
    </location>
</feature>
<feature type="modified residue" description="Phosphotyrosine; by autocatalysis" evidence="18">
    <location>
        <position position="319"/>
    </location>
</feature>
<feature type="modified residue" description="Phosphotyrosine; by autocatalysis" evidence="18">
    <location>
        <position position="321"/>
    </location>
</feature>
<feature type="modified residue" description="Phosphothreonine; by autocatalysis" evidence="18">
    <location>
        <position position="402"/>
    </location>
</feature>
<feature type="modified residue" description="Phosphotyrosine; by autocatalysis" evidence="18">
    <location>
        <position position="449"/>
    </location>
</feature>
<feature type="modified residue" description="Phosphoserine" evidence="40">
    <location>
        <position position="529"/>
    </location>
</feature>
<feature type="modified residue" description="Phosphoserine" evidence="1">
    <location>
        <position position="538"/>
    </location>
</feature>
<feature type="modified residue" description="Phosphoserine" evidence="37">
    <location>
        <position position="748"/>
    </location>
</feature>
<feature type="modified residue" description="Phosphoserine" evidence="37">
    <location>
        <position position="758"/>
    </location>
</feature>
<feature type="splice variant" id="VSP_004917" description="In isoform 1." evidence="30 33">
    <location>
        <begin position="70"/>
        <end position="78"/>
    </location>
</feature>
<feature type="splice variant" id="VSP_004918" description="In isoform 2." evidence="34">
    <original>GGSSGTSNSGRARS</original>
    <variation>GASAISCSSWLVRH</variation>
    <location>
        <begin position="516"/>
        <end position="529"/>
    </location>
</feature>
<feature type="splice variant" id="VSP_004920" description="In isoform 3." evidence="34">
    <original>GGSSGTSNSG</original>
    <variation>GGAALDARCL</variation>
    <location>
        <begin position="516"/>
        <end position="525"/>
    </location>
</feature>
<feature type="splice variant" id="VSP_004921" description="In isoform 3." evidence="34">
    <location>
        <begin position="526"/>
        <end position="763"/>
    </location>
</feature>
<feature type="splice variant" id="VSP_004919" description="In isoform 2." evidence="34">
    <location>
        <begin position="530"/>
        <end position="763"/>
    </location>
</feature>
<feature type="splice variant" id="VSP_004922" description="In isoform 4." evidence="28">
    <original>RQQFPAPLGWSGTEAPTQVTVETHPV</original>
    <variation>SSHVVHLLVSPAILRWSSTGCQVPLE</variation>
    <location>
        <begin position="559"/>
        <end position="584"/>
    </location>
</feature>
<feature type="splice variant" id="VSP_004923" description="In isoform 4." evidence="28">
    <location>
        <begin position="585"/>
        <end position="763"/>
    </location>
</feature>
<feature type="sequence variant" id="VAR_009395" evidence="6">
    <original>Y</original>
    <variation>F</variation>
    <location>
        <position position="415"/>
    </location>
</feature>
<feature type="sequence variant" id="VAR_040453" description="In dbSNP:rs55720916." evidence="9 27">
    <original>A</original>
    <variation>P</variation>
    <location>
        <position position="679"/>
    </location>
</feature>
<feature type="sequence variant" id="VAR_009396" evidence="6">
    <original>Q</original>
    <variation>H</variation>
    <location>
        <position position="681"/>
    </location>
</feature>
<feature type="mutagenesis site" description="Abolished protein kinase activity." evidence="18 21">
    <original>K</original>
    <variation>R</variation>
    <location>
        <position position="188"/>
    </location>
</feature>
<feature type="mutagenesis site" description="Mildly reduces kinase activity. Does not abolish autophosphorylation on tyrosine residues." evidence="18">
    <original>Y</original>
    <variation>F</variation>
    <location>
        <position position="321"/>
    </location>
</feature>
<feature type="sequence conflict" description="In Ref. 1; AAC50939." evidence="34" ref="1">
    <original>G</original>
    <variation>A</variation>
    <location>
        <position position="32"/>
    </location>
</feature>
<feature type="sequence conflict" description="In Ref. 1; AAC50939." evidence="34" ref="1">
    <original>N</original>
    <variation>S</variation>
    <location>
        <position position="47"/>
    </location>
</feature>
<feature type="sequence conflict" description="In Ref. 1; AAC50939." evidence="34" ref="1">
    <original>S</original>
    <variation>P</variation>
    <location>
        <position position="57"/>
    </location>
</feature>
<feature type="sequence conflict" description="In Ref. 1; AAC50939." evidence="34" ref="1">
    <original>Q</original>
    <variation>R</variation>
    <location>
        <position position="123"/>
    </location>
</feature>
<feature type="sequence conflict" description="In Ref. 6; CAA05059." evidence="34" ref="6">
    <original>A</original>
    <variation>V</variation>
    <location>
        <position position="266"/>
    </location>
</feature>
<feature type="sequence conflict" description="In Ref. 6; CAA05059." evidence="34" ref="6">
    <original>G</original>
    <variation>R</variation>
    <location>
        <position position="357"/>
    </location>
</feature>
<feature type="sequence conflict" description="In Ref. 1; AAC50939." evidence="34" ref="1">
    <original>K</original>
    <variation>N</variation>
    <location>
        <position position="397"/>
    </location>
</feature>
<feature type="sequence conflict" description="In Ref. 1; AAC50939." evidence="34" ref="1">
    <original>A</original>
    <variation>G</variation>
    <location>
        <position position="592"/>
    </location>
</feature>
<feature type="helix" evidence="42">
    <location>
        <begin position="137"/>
        <end position="139"/>
    </location>
</feature>
<feature type="turn" evidence="42">
    <location>
        <begin position="156"/>
        <end position="158"/>
    </location>
</feature>
<feature type="strand" evidence="42">
    <location>
        <begin position="159"/>
        <end position="168"/>
    </location>
</feature>
<feature type="strand" evidence="42">
    <location>
        <begin position="171"/>
        <end position="178"/>
    </location>
</feature>
<feature type="turn" evidence="42">
    <location>
        <begin position="179"/>
        <end position="182"/>
    </location>
</feature>
<feature type="strand" evidence="42">
    <location>
        <begin position="183"/>
        <end position="190"/>
    </location>
</feature>
<feature type="helix" evidence="42">
    <location>
        <begin position="194"/>
        <end position="212"/>
    </location>
</feature>
<feature type="strand" evidence="47">
    <location>
        <begin position="215"/>
        <end position="217"/>
    </location>
</feature>
<feature type="strand" evidence="43">
    <location>
        <begin position="219"/>
        <end position="221"/>
    </location>
</feature>
<feature type="strand" evidence="42">
    <location>
        <begin position="224"/>
        <end position="230"/>
    </location>
</feature>
<feature type="strand" evidence="42">
    <location>
        <begin position="233"/>
        <end position="238"/>
    </location>
</feature>
<feature type="helix" evidence="42">
    <location>
        <begin position="245"/>
        <end position="251"/>
    </location>
</feature>
<feature type="turn" evidence="42">
    <location>
        <begin position="252"/>
        <end position="254"/>
    </location>
</feature>
<feature type="helix" evidence="42">
    <location>
        <begin position="259"/>
        <end position="276"/>
    </location>
</feature>
<feature type="turn" evidence="42">
    <location>
        <begin position="279"/>
        <end position="281"/>
    </location>
</feature>
<feature type="helix" evidence="42">
    <location>
        <begin position="290"/>
        <end position="292"/>
    </location>
</feature>
<feature type="strand" evidence="42">
    <location>
        <begin position="293"/>
        <end position="297"/>
    </location>
</feature>
<feature type="turn" evidence="48">
    <location>
        <begin position="299"/>
        <end position="301"/>
    </location>
</feature>
<feature type="strand" evidence="42">
    <location>
        <begin position="303"/>
        <end position="305"/>
    </location>
</feature>
<feature type="helix" evidence="49">
    <location>
        <begin position="308"/>
        <end position="310"/>
    </location>
</feature>
<feature type="helix" evidence="43">
    <location>
        <begin position="314"/>
        <end position="316"/>
    </location>
</feature>
<feature type="helix" evidence="42">
    <location>
        <begin position="325"/>
        <end position="327"/>
    </location>
</feature>
<feature type="helix" evidence="42">
    <location>
        <begin position="330"/>
        <end position="333"/>
    </location>
</feature>
<feature type="helix" evidence="42">
    <location>
        <begin position="341"/>
        <end position="356"/>
    </location>
</feature>
<feature type="helix" evidence="42">
    <location>
        <begin position="366"/>
        <end position="377"/>
    </location>
</feature>
<feature type="helix" evidence="42">
    <location>
        <begin position="382"/>
        <end position="385"/>
    </location>
</feature>
<feature type="helix" evidence="42">
    <location>
        <begin position="391"/>
        <end position="394"/>
    </location>
</feature>
<feature type="strand" evidence="42">
    <location>
        <begin position="395"/>
        <end position="397"/>
    </location>
</feature>
<feature type="turn" evidence="46">
    <location>
        <begin position="399"/>
        <end position="401"/>
    </location>
</feature>
<feature type="strand" evidence="42">
    <location>
        <begin position="403"/>
        <end position="405"/>
    </location>
</feature>
<feature type="helix" evidence="44">
    <location>
        <begin position="409"/>
        <end position="411"/>
    </location>
</feature>
<feature type="helix" evidence="42">
    <location>
        <begin position="423"/>
        <end position="426"/>
    </location>
</feature>
<feature type="turn" evidence="42">
    <location>
        <begin position="427"/>
        <end position="432"/>
    </location>
</feature>
<feature type="helix" evidence="42">
    <location>
        <begin position="434"/>
        <end position="436"/>
    </location>
</feature>
<feature type="turn" evidence="42">
    <location>
        <begin position="437"/>
        <end position="440"/>
    </location>
</feature>
<feature type="strand" evidence="45">
    <location>
        <begin position="441"/>
        <end position="443"/>
    </location>
</feature>
<feature type="helix" evidence="42">
    <location>
        <begin position="446"/>
        <end position="459"/>
    </location>
</feature>
<feature type="turn" evidence="42">
    <location>
        <begin position="464"/>
        <end position="466"/>
    </location>
</feature>
<feature type="helix" evidence="42">
    <location>
        <begin position="470"/>
        <end position="475"/>
    </location>
</feature>
<feature type="helix" evidence="41">
    <location>
        <begin position="477"/>
        <end position="479"/>
    </location>
</feature>
<keyword id="KW-0002">3D-structure</keyword>
<keyword id="KW-0025">Alternative splicing</keyword>
<keyword id="KW-0067">ATP-binding</keyword>
<keyword id="KW-0945">Host-virus interaction</keyword>
<keyword id="KW-0991">Intellectual disability</keyword>
<keyword id="KW-0418">Kinase</keyword>
<keyword id="KW-0547">Nucleotide-binding</keyword>
<keyword id="KW-0539">Nucleus</keyword>
<keyword id="KW-0597">Phosphoprotein</keyword>
<keyword id="KW-1267">Proteomics identification</keyword>
<keyword id="KW-1185">Reference proteome</keyword>
<keyword id="KW-0723">Serine/threonine-protein kinase</keyword>
<keyword id="KW-0804">Transcription</keyword>
<keyword id="KW-0805">Transcription regulation</keyword>
<keyword id="KW-0808">Transferase</keyword>
<keyword id="KW-0829">Tyrosine-protein kinase</keyword>
<sequence length="763" mass="85584">MHTGGETSACKPSSVRLAPSFSFHAAGLQMAGQMPHSHQYSDRRQPNISDQQVSALSYSDQIQQPLTNQVMPDIVMLQRRMPQTFRDPATAPLRKLSVDLIKTYKHINEVYYAKKKRRHQQGQGDDSSHKKERKVYNDGYDDDNYDYIVKNGEKWMDRYEIDSLIGKGSFGQVVKAYDRVEQEWVAIKIIKNKKAFLNQAQIEVRLLELMNKHDTEMKYYIVHLKRHFMFRNHLCLVFEMLSYNLYDLLRNTNFRGVSLNLTRKFAQQMCTALLFLATPELSIIHCDLKPENILLCNPKRSAIKIVDFGSSCQLGQRIYQYIQSRFYRSPEVLLGMPYDLAIDMWSLGCILVEMHTGEPLFSGANEVDQMNKIVEVLGIPPAHILDQAPKARKFFEKLPDGTWNLKKTKDGKREYKPPGTRKLHNILGVETGGPGGRRAGESGHTVADYLKFKDLILRMLDYDPKTRIQPYYALQHSFFKKTADEGTNTSNSVSTSPAMEQSQSSGTTSSTSSSSGGSSGTSNSGRARSDPTHQHRHSGGHFTAAVQAMDCETHSPQVRQQFPAPLGWSGTEAPTQVTVETHPVQETTFHVAPQQNALHHHHGNSSHHHHHHHHHHHHHGQQALGNRTRPRVYNSPTNSSSTQDSMEVGHSHHSMTSLSSSTTSSSTSSSSTGNQGNQAYQNRPVAANTLDFGQNGAMDVNLTVYSNPRQETGIAGHPTYQFSANTGPAHYMTEGHLTMRQGADREESPMTGVCVQQSPVASS</sequence>
<gene>
    <name evidence="29 36" type="primary">DYRK1A</name>
    <name type="synonym">DYRK</name>
    <name evidence="31" type="synonym">MNB</name>
    <name type="synonym">MNBH</name>
</gene>
<protein>
    <recommendedName>
        <fullName>Dual specificity tyrosine-phosphorylation-regulated kinase 1A</fullName>
        <ecNumber evidence="21">2.7.11.23</ecNumber>
        <ecNumber evidence="12 15 18 20 23">2.7.12.1</ecNumber>
    </recommendedName>
    <alternativeName>
        <fullName>Dual specificity YAK1-related kinase</fullName>
    </alternativeName>
    <alternativeName>
        <fullName>HP86</fullName>
    </alternativeName>
    <alternativeName>
        <fullName evidence="31 32">Protein kinase minibrain homolog</fullName>
        <shortName>MNBH</shortName>
        <shortName>hMNB</shortName>
    </alternativeName>
</protein>
<organism>
    <name type="scientific">Homo sapiens</name>
    <name type="common">Human</name>
    <dbReference type="NCBI Taxonomy" id="9606"/>
    <lineage>
        <taxon>Eukaryota</taxon>
        <taxon>Metazoa</taxon>
        <taxon>Chordata</taxon>
        <taxon>Craniata</taxon>
        <taxon>Vertebrata</taxon>
        <taxon>Euteleostomi</taxon>
        <taxon>Mammalia</taxon>
        <taxon>Eutheria</taxon>
        <taxon>Euarchontoglires</taxon>
        <taxon>Primates</taxon>
        <taxon>Haplorrhini</taxon>
        <taxon>Catarrhini</taxon>
        <taxon>Hominidae</taxon>
        <taxon>Homo</taxon>
    </lineage>
</organism>
<reference key="1">
    <citation type="journal article" date="1996" name="Genomics">
        <title>Isolation of human and murine homologues of the Drosophila minibrain gene: human homologue maps to 21q22.2 in the Down syndrome 'critical region'.</title>
        <authorList>
            <person name="Song W.J."/>
            <person name="Sternberg L.R."/>
            <person name="Kasten-Sportes C."/>
            <person name="van Keuren M.L."/>
            <person name="Chung S.H."/>
            <person name="Slack A.C."/>
            <person name="Miller D.E."/>
            <person name="Glover T.W."/>
            <person name="Chiang P.W."/>
            <person name="Lou L."/>
            <person name="Kurnit D.W."/>
        </authorList>
    </citation>
    <scope>NUCLEOTIDE SEQUENCE [MRNA] (ISOFORM LONG)</scope>
    <scope>VARIANT PRO-679</scope>
    <scope>TISSUE SPECIFICITY</scope>
    <source>
        <tissue>Fetal brain</tissue>
    </source>
</reference>
<reference key="2">
    <citation type="journal article" date="1996" name="Hum. Mol. Genet.">
        <title>A human homologue of Drosophila minibrain (MNB) is expressed in the neuronal regions affected in Down syndrome and maps to the critical region.</title>
        <authorList>
            <person name="Guimera J."/>
            <person name="Casas C."/>
            <person name="Pucharcos C."/>
            <person name="Solans A."/>
            <person name="Domenech A."/>
            <person name="Planas A.M."/>
            <person name="Ashley J."/>
            <person name="Lovett M."/>
            <person name="Estivill X."/>
            <person name="Pritchard M.A."/>
        </authorList>
    </citation>
    <scope>NUCLEOTIDE SEQUENCE [MRNA] (ISOFORM LONG)</scope>
    <scope>TISSUE SPECIFICITY</scope>
    <scope>POSSIBLE INVOLVEMENT IN DOWN SYNDROME</scope>
</reference>
<reference key="3">
    <citation type="journal article" date="1996" name="Biochem. Biophys. Res. Commun.">
        <title>Cloning of a human homolog of the Drosophila minibrain/rat Dyrk gene from 'the Down syndrome critical region' of chromosome 21.</title>
        <authorList>
            <person name="Shindoh N."/>
            <person name="Kudoh J."/>
            <person name="Maeda H."/>
            <person name="Yamaki A."/>
            <person name="Minoshima S."/>
            <person name="Shimizu Y."/>
            <person name="Shimizu N."/>
        </authorList>
    </citation>
    <scope>NUCLEOTIDE SEQUENCE [MRNA] (ISOFORM 1)</scope>
    <scope>FUNCTION</scope>
    <scope>TISSUE SPECIFICITY</scope>
    <scope>DEVELOPMENTAL STAGE</scope>
    <source>
        <tissue>Fetal brain</tissue>
    </source>
</reference>
<reference key="4">
    <citation type="journal article" date="1997" name="Genome Res.">
        <title>Gene identification in 1.6-Mb region of the Down syndrome region on chromosome 21.</title>
        <authorList>
            <person name="Ohira M."/>
            <person name="Seki N."/>
            <person name="Nagase T."/>
            <person name="Suzuki E."/>
            <person name="Nomura N."/>
            <person name="Ohara O."/>
            <person name="Hattori M."/>
            <person name="Sakaki Y."/>
            <person name="Eki T."/>
            <person name="Murakami Y."/>
            <person name="Saito T."/>
            <person name="Ichikawa H."/>
            <person name="Ohki M."/>
        </authorList>
    </citation>
    <scope>NUCLEOTIDE SEQUENCE [MRNA] (ISOFORM 1)</scope>
    <source>
        <tissue>Promyelocytic leukemia</tissue>
    </source>
</reference>
<reference key="5">
    <citation type="journal article" date="1999" name="Genomics">
        <title>Human minibrain homologue (MNBH/DYRK1): characterization, alternative splicing, differential tissue expression, and overexpression in Down syndrome.</title>
        <authorList>
            <person name="Guimera J."/>
            <person name="Casas C."/>
            <person name="Estivill X."/>
            <person name="Pritchard M.A."/>
        </authorList>
    </citation>
    <scope>NUCLEOTIDE SEQUENCE [MRNA] (ISOFORM 4)</scope>
    <scope>TISSUE SPECIFICITY</scope>
    <scope>POSSIBLE INVOLVEMENT IN DOWN SYNDROME</scope>
    <scope>VARIANTS PHE-415 AND HIS-681</scope>
    <scope>ALTERNATIVE SPLICING</scope>
</reference>
<reference key="6">
    <citation type="journal article" date="1998" name="Genomics">
        <title>Transcriptional map of the 2.5-Mb CBR-ERG region of chromosome 21 involved in Down syndrome.</title>
        <authorList>
            <person name="Dahmane N."/>
            <person name="Ait-Ghezala G."/>
            <person name="Gosset P."/>
            <person name="Chamoun Z."/>
            <person name="Dufresne-Zacharia M.-C."/>
            <person name="Lopes C."/>
            <person name="Rabatel N."/>
            <person name="Gassanova-Maugenre S."/>
            <person name="Chettouh Z."/>
            <person name="Abramowski V."/>
            <person name="Fayet E."/>
            <person name="Yaspo M.-L."/>
            <person name="Korn B."/>
            <person name="Blouin J.-L."/>
            <person name="Lehrach H."/>
            <person name="Poustka A."/>
            <person name="Antonarakis S.E."/>
            <person name="Sinet P.-M."/>
            <person name="Creau N."/>
            <person name="Delabar J.-M."/>
        </authorList>
    </citation>
    <scope>NUCLEOTIDE SEQUENCE [MRNA] OF 234-380</scope>
    <source>
        <tissue>Fetal brain</tissue>
    </source>
</reference>
<reference key="7">
    <citation type="journal article" date="2003" name="J. Biol. Chem.">
        <title>Serine/threonine kinase Mirk/Dyrk1B is an inhibitor of epithelial cell migration and is negatively regulated by the Met adaptor Ran-binding protein M.</title>
        <authorList>
            <person name="Zou Y."/>
            <person name="Lim S."/>
            <person name="Lee K."/>
            <person name="Deng X."/>
            <person name="Friedman E."/>
        </authorList>
    </citation>
    <scope>INTERACTION WITH RANBP9</scope>
    <scope>FUNCTION</scope>
    <scope>ACTIVITY REGULATION</scope>
</reference>
<reference key="8">
    <citation type="journal article" date="2004" name="J. Biol. Chem.">
        <title>Phosphorylation of Ser640 in muscle glycogen synthase by DYRK family protein kinases.</title>
        <authorList>
            <person name="Skurat A.V."/>
            <person name="Dietrich A.D."/>
        </authorList>
    </citation>
    <scope>INTERACTION WITH WDR68</scope>
</reference>
<reference key="9">
    <citation type="journal article" date="2005" name="Nat. Biotechnol.">
        <title>Immunoaffinity profiling of tyrosine phosphorylation in cancer cells.</title>
        <authorList>
            <person name="Rush J."/>
            <person name="Moritz A."/>
            <person name="Lee K.A."/>
            <person name="Guo A."/>
            <person name="Goss V.L."/>
            <person name="Spek E.J."/>
            <person name="Zhang H."/>
            <person name="Zha X.-M."/>
            <person name="Polakiewicz R.D."/>
            <person name="Comb M.J."/>
        </authorList>
    </citation>
    <scope>IDENTIFICATION BY MASS SPECTROMETRY [LARGE SCALE ANALYSIS]</scope>
</reference>
<reference key="10">
    <citation type="journal article" date="2008" name="Mol. Cell">
        <title>Kinase-selective enrichment enables quantitative phosphoproteomics of the kinome across the cell cycle.</title>
        <authorList>
            <person name="Daub H."/>
            <person name="Olsen J.V."/>
            <person name="Bairlein M."/>
            <person name="Gnad F."/>
            <person name="Oppermann F.S."/>
            <person name="Korner R."/>
            <person name="Greff Z."/>
            <person name="Keri G."/>
            <person name="Stemmann O."/>
            <person name="Mann M."/>
        </authorList>
    </citation>
    <scope>PHOSPHORYLATION [LARGE SCALE ANALYSIS] AT SER-748 AND SER-758</scope>
    <scope>IDENTIFICATION BY MASS SPECTROMETRY [LARGE SCALE ANALYSIS]</scope>
    <source>
        <tissue>Cervix carcinoma</tissue>
    </source>
</reference>
<reference key="11">
    <citation type="journal article" date="2009" name="PLoS Genet.">
        <title>Genome-wide analysis of histidine repeats reveals their role in the localization of human proteins to the nuclear speckles compartment.</title>
        <authorList>
            <person name="Salichs E."/>
            <person name="Ledda A."/>
            <person name="Mularoni L."/>
            <person name="Alba M.M."/>
            <person name="de la Luna S."/>
        </authorList>
    </citation>
    <scope>POLY-HISTIDINE REPEATS</scope>
</reference>
<reference key="12">
    <citation type="journal article" date="2009" name="Sci. Signal.">
        <title>Quantitative phosphoproteomic analysis of T cell receptor signaling reveals system-wide modulation of protein-protein interactions.</title>
        <authorList>
            <person name="Mayya V."/>
            <person name="Lundgren D.H."/>
            <person name="Hwang S.-I."/>
            <person name="Rezaul K."/>
            <person name="Wu L."/>
            <person name="Eng J.K."/>
            <person name="Rodionov V."/>
            <person name="Han D.K."/>
        </authorList>
    </citation>
    <scope>PHOSPHORYLATION [LARGE SCALE ANALYSIS] AT TYR-145</scope>
    <scope>IDENTIFICATION BY MASS SPECTROMETRY [LARGE SCALE ANALYSIS]</scope>
    <source>
        <tissue>Leukemic T-cell</tissue>
    </source>
</reference>
<reference key="13">
    <citation type="journal article" date="2010" name="J. Biol. Chem.">
        <title>DYRK1A and DYRK3 promote cell survival through phosphorylation and activation of SIRT1.</title>
        <authorList>
            <person name="Guo X."/>
            <person name="Williams J.G."/>
            <person name="Schug T.T."/>
            <person name="Li X."/>
        </authorList>
    </citation>
    <scope>SUBCELLULAR LOCATION</scope>
</reference>
<reference key="14">
    <citation type="journal article" date="2011" name="Clin. Genet.">
        <title>Intragenic deletion in DYRK1A leads to mental retardation and primary microcephaly.</title>
        <authorList>
            <person name="van Bon B.W."/>
            <person name="Hoischen A."/>
            <person name="Hehir-Kwa J."/>
            <person name="de Brouwer A.P."/>
            <person name="Ruivenkamp C."/>
            <person name="Gijsbers A.C."/>
            <person name="Marcelis C.L."/>
            <person name="de Leeuw N."/>
            <person name="Veltman J.A."/>
            <person name="Brunner H.G."/>
            <person name="de Vries B.B."/>
        </authorList>
    </citation>
    <scope>INVOLVEMENT IN MRD7</scope>
</reference>
<reference key="15">
    <citation type="journal article" date="2011" name="J. Biol. Chem.">
        <title>Splice variants of the dual specificity tyrosine phosphorylation-regulated kinase 4 (DYRK4) differ in their subcellular localization and catalytic activity.</title>
        <authorList>
            <person name="Papadopoulos C."/>
            <person name="Arato K."/>
            <person name="Lilienthal E."/>
            <person name="Zerweck J."/>
            <person name="Schutkowski M."/>
            <person name="Chatain N."/>
            <person name="Muller-Newen G."/>
            <person name="Becker W."/>
            <person name="de la Luna S."/>
        </authorList>
    </citation>
    <scope>FUNCTION</scope>
    <scope>SUBSTRATE SPECIFICITY</scope>
</reference>
<reference key="16">
    <citation type="journal article" date="2012" name="Science">
        <title>Multiplex targeted sequencing identifies recurrently mutated genes in autism spectrum disorders.</title>
        <authorList>
            <person name="O'Roak B.J."/>
            <person name="Vives L."/>
            <person name="Fu W."/>
            <person name="Egertson J.D."/>
            <person name="Stanaway I.B."/>
            <person name="Phelps I.G."/>
            <person name="Carvill G."/>
            <person name="Kumar A."/>
            <person name="Lee C."/>
            <person name="Ankenman K."/>
            <person name="Munson J."/>
            <person name="Hiatt J.B."/>
            <person name="Turner E.H."/>
            <person name="Levy R."/>
            <person name="O'Day D.R."/>
            <person name="Krumm N."/>
            <person name="Coe B.P."/>
            <person name="Martin B.K."/>
            <person name="Borenstein E."/>
            <person name="Nickerson D.A."/>
            <person name="Mefford H.C."/>
            <person name="Doherty D."/>
            <person name="Akey J.M."/>
            <person name="Bernier R."/>
            <person name="Eichler E.E."/>
            <person name="Shendure J."/>
        </authorList>
    </citation>
    <scope>INVOLVEMENT IN MRD7</scope>
</reference>
<reference key="17">
    <citation type="journal article" date="2013" name="Cell">
        <title>Dual specificity kinase DYRK3 couples stress granule condensation/dissolution to mTORC1 signaling.</title>
        <authorList>
            <person name="Wippich F."/>
            <person name="Bodenmiller B."/>
            <person name="Trajkovska M.G."/>
            <person name="Wanka S."/>
            <person name="Aebersold R."/>
            <person name="Pelkmans L."/>
        </authorList>
    </citation>
    <scope>SUBCELLULAR LOCATION</scope>
</reference>
<reference key="18">
    <citation type="journal article" date="2013" name="J. Proteome Res.">
        <title>Toward a comprehensive characterization of a human cancer cell phosphoproteome.</title>
        <authorList>
            <person name="Zhou H."/>
            <person name="Di Palma S."/>
            <person name="Preisinger C."/>
            <person name="Peng M."/>
            <person name="Polat A.N."/>
            <person name="Heck A.J."/>
            <person name="Mohammed S."/>
        </authorList>
    </citation>
    <scope>PHOSPHORYLATION [LARGE SCALE ANALYSIS] AT SER-14 AND TYR-145</scope>
    <scope>IDENTIFICATION BY MASS SPECTROMETRY [LARGE SCALE ANALYSIS]</scope>
    <source>
        <tissue>Erythroleukemia</tissue>
    </source>
</reference>
<reference key="19">
    <citation type="journal article" date="2013" name="J. Virol.">
        <title>Dissection of the C-terminal region of E1A redefines the roles of CtBP and other cellular targets in oncogenic transformation.</title>
        <authorList>
            <person name="Cohen M.J."/>
            <person name="Yousef A.F."/>
            <person name="Massimi P."/>
            <person name="Fonseca G.J."/>
            <person name="Todorovic B."/>
            <person name="Pelka P."/>
            <person name="Turnell A.S."/>
            <person name="Banks L."/>
            <person name="Mymryk J.S."/>
        </authorList>
    </citation>
    <scope>INTERACTION WITH HADV5 E1A (MICROBIAL INFECTION)</scope>
</reference>
<reference key="20">
    <citation type="journal article" date="2014" name="J. Proteomics">
        <title>An enzyme assisted RP-RPLC approach for in-depth analysis of human liver phosphoproteome.</title>
        <authorList>
            <person name="Bian Y."/>
            <person name="Song C."/>
            <person name="Cheng K."/>
            <person name="Dong M."/>
            <person name="Wang F."/>
            <person name="Huang J."/>
            <person name="Sun D."/>
            <person name="Wang L."/>
            <person name="Ye M."/>
            <person name="Zou H."/>
        </authorList>
    </citation>
    <scope>PHOSPHORYLATION [LARGE SCALE ANALYSIS] AT SER-529</scope>
    <scope>IDENTIFICATION BY MASS SPECTROMETRY [LARGE SCALE ANALYSIS]</scope>
    <source>
        <tissue>Liver</tissue>
    </source>
</reference>
<reference key="21">
    <citation type="journal article" date="2019" name="Sci. Rep.">
        <title>The nuclear interactome of DYRK1A reveals a functional role in DNA damage repair.</title>
        <authorList>
            <person name="Guard S.E."/>
            <person name="Poss Z.C."/>
            <person name="Ebmeier C.C."/>
            <person name="Pagratis M."/>
            <person name="Simpson H."/>
            <person name="Taatjes D.J."/>
            <person name="Old W.M."/>
        </authorList>
    </citation>
    <scope>FUNCTION</scope>
</reference>
<reference key="22">
    <citation type="journal article" date="2019" name="Cell Cycle">
        <title>DYRK1A regulates the recruitment of 53BP1 to the sites of DNA damage in part through interaction with RNF169.</title>
        <authorList>
            <person name="Menon V.R."/>
            <person name="Ananthapadmanabhan V."/>
            <person name="Swanson S."/>
            <person name="Saini S."/>
            <person name="Sesay F."/>
            <person name="Yakovlev V."/>
            <person name="Florens L."/>
            <person name="DeCaprio J.A."/>
            <person name="Washburn M.P."/>
            <person name="Dozmorov M."/>
            <person name="Litovchick L."/>
        </authorList>
    </citation>
    <scope>FUNCTION</scope>
    <scope>CATALYTIC ACTIVITY</scope>
</reference>
<reference key="23">
    <citation type="journal article" date="2010" name="Nat. Commun.">
        <title>Development of a novel selective inhibitor of the Down syndrome-related kinase Dyrk1A.</title>
        <authorList>
            <person name="Ogawa Y."/>
            <person name="Nonaka Y."/>
            <person name="Goto T."/>
            <person name="Ohnishi E."/>
            <person name="Hiramatsu T."/>
            <person name="Kii I."/>
            <person name="Yoshida M."/>
            <person name="Ikura T."/>
            <person name="Onogi H."/>
            <person name="Shibuya H."/>
            <person name="Hosoya T."/>
            <person name="Ito N."/>
            <person name="Hagiwara M."/>
        </authorList>
    </citation>
    <scope>X-RAY CRYSTALLOGRAPHY (2.60 ANGSTROMS) OF 126-490 IN COMPLEXES WITH THE SYNTHETIC INHIBITORS HARMINE AND INDY</scope>
    <scope>CATALYTIC ACTIVITY</scope>
    <scope>FUNCTION</scope>
</reference>
<reference key="24">
    <citation type="journal article" date="2012" name="J. Med. Chem.">
        <title>Selectivity, cocrystal structures, and neuroprotective properties of leucettines, a family of protein kinase inhibitors derived from the marine sponge alkaloid leucettamine B.</title>
        <authorList>
            <person name="Tahtouh T."/>
            <person name="Elkins J.M."/>
            <person name="Filippakopoulos P."/>
            <person name="Soundararajan M."/>
            <person name="Burgy G."/>
            <person name="Durieu E."/>
            <person name="Cochet C."/>
            <person name="Schmid R.S."/>
            <person name="Lo D.C."/>
            <person name="Delhommel F."/>
            <person name="Oberholzer A.E."/>
            <person name="Pearl L.H."/>
            <person name="Carreaux F."/>
            <person name="Bazureau J.P."/>
            <person name="Knapp S."/>
            <person name="Meijer L."/>
        </authorList>
    </citation>
    <scope>X-RAY CRYSTALLOGRAPHY (3.15 ANGSTROMS) OF 128-485</scope>
    <scope>CATALYTIC ACTIVITY</scope>
    <scope>ACTIVITY REGULATION</scope>
</reference>
<reference key="25">
    <citation type="journal article" date="2013" name="Bioorg. Med. Chem. Lett.">
        <title>Pyrido[2,3-d]pyrimidines: discovery and preliminary SAR of a novel series of DYRK1B and DYRK1A inhibitors.</title>
        <authorList>
            <person name="Anderson K."/>
            <person name="Chen Y."/>
            <person name="Chen Z."/>
            <person name="Dominique R."/>
            <person name="Glenn K."/>
            <person name="He Y."/>
            <person name="Janson C."/>
            <person name="Luk K.C."/>
            <person name="Lukacs C."/>
            <person name="Polonskaia A."/>
            <person name="Qiao Q."/>
            <person name="Railkar A."/>
            <person name="Rossman P."/>
            <person name="Sun H."/>
            <person name="Xiang Q."/>
            <person name="Vilenchik M."/>
            <person name="Wovkulich P."/>
            <person name="Zhang X."/>
        </authorList>
    </citation>
    <scope>X-RAY CRYSTALLOGRAPHY (2.35 ANGSTROMS) OF 127-485 IN COMPLEX WITH SYNTHETIC INHIBITOR</scope>
    <scope>CATALYTIC ACTIVITY</scope>
</reference>
<reference key="26">
    <citation type="journal article" date="2015" name="Mol. Cell">
        <title>Chromatin-wide profiling of DYRK1A reveals a role as a gene-specific RNA polymerase II CTD kinase.</title>
        <authorList>
            <person name="Di Vona C."/>
            <person name="Bezdan D."/>
            <person name="Islam A.B."/>
            <person name="Salichs E."/>
            <person name="Lopez-Bigas N."/>
            <person name="Ossowski S."/>
            <person name="de la Luna S."/>
        </authorList>
    </citation>
    <scope>FUNCTION</scope>
    <scope>CATALYTIC ACTIVITY</scope>
    <scope>SUBCELLULAR LOCATION</scope>
    <scope>MUTAGENESIS OF LYS-188</scope>
</reference>
<reference key="27">
    <citation type="journal article" date="2018" name="Nature">
        <title>Phase-separation mechanism for C-terminal hyperphosphorylation of RNA polymerase II.</title>
        <authorList>
            <person name="Lu H."/>
            <person name="Yu D."/>
            <person name="Hansen A.S."/>
            <person name="Ganguly S."/>
            <person name="Liu R."/>
            <person name="Heckert A."/>
            <person name="Darzacq X."/>
            <person name="Zhou Q."/>
        </authorList>
    </citation>
    <scope>FUNCTION</scope>
    <scope>DOMAIN</scope>
</reference>
<reference key="28">
    <citation type="journal article" date="2013" name="Structure">
        <title>Structures of Down syndrome kinases, DYRKs, reveal mechanisms of kinase activation and substrate recognition.</title>
        <authorList>
            <person name="Soundararajan M."/>
            <person name="Roos A.K."/>
            <person name="Savitsky P."/>
            <person name="Filippakopoulos P."/>
            <person name="Kettenbach A.N."/>
            <person name="Olsen J.V."/>
            <person name="Gerber S.A."/>
            <person name="Eswaran J."/>
            <person name="Knapp S."/>
            <person name="Elkins J.M."/>
        </authorList>
    </citation>
    <scope>X-RAY CRYSTALLOGRAPHY (2.40 ANGSTROMS) OF 127-485 IN COMPLEXES WITH PEPTIDE SUBSTRATE AND INHIBITOR DJM2005</scope>
    <scope>CATALYTIC ACTIVITY</scope>
    <scope>FUNCTION</scope>
    <scope>AUTOPHOSPHORYLATION</scope>
    <scope>MUTAGENESIS OF LYS-188 AND TYR-321</scope>
    <scope>PHOSPHORYLATION AT TYR-111; TYR-140; TYR-159; TYR-177; SER-310; TYR-319; TYR-321; THR-402 AND TYR-449</scope>
    <scope>ACTIVE SITE</scope>
    <scope>IDENTIFICATION BY MASS SPECTROMETRY</scope>
</reference>
<reference key="29">
    <citation type="journal article" date="2007" name="Nature">
        <title>Patterns of somatic mutation in human cancer genomes.</title>
        <authorList>
            <person name="Greenman C."/>
            <person name="Stephens P."/>
            <person name="Smith R."/>
            <person name="Dalgliesh G.L."/>
            <person name="Hunter C."/>
            <person name="Bignell G."/>
            <person name="Davies H."/>
            <person name="Teague J."/>
            <person name="Butler A."/>
            <person name="Stevens C."/>
            <person name="Edkins S."/>
            <person name="O'Meara S."/>
            <person name="Vastrik I."/>
            <person name="Schmidt E.E."/>
            <person name="Avis T."/>
            <person name="Barthorpe S."/>
            <person name="Bhamra G."/>
            <person name="Buck G."/>
            <person name="Choudhury B."/>
            <person name="Clements J."/>
            <person name="Cole J."/>
            <person name="Dicks E."/>
            <person name="Forbes S."/>
            <person name="Gray K."/>
            <person name="Halliday K."/>
            <person name="Harrison R."/>
            <person name="Hills K."/>
            <person name="Hinton J."/>
            <person name="Jenkinson A."/>
            <person name="Jones D."/>
            <person name="Menzies A."/>
            <person name="Mironenko T."/>
            <person name="Perry J."/>
            <person name="Raine K."/>
            <person name="Richardson D."/>
            <person name="Shepherd R."/>
            <person name="Small A."/>
            <person name="Tofts C."/>
            <person name="Varian J."/>
            <person name="Webb T."/>
            <person name="West S."/>
            <person name="Widaa S."/>
            <person name="Yates A."/>
            <person name="Cahill D.P."/>
            <person name="Louis D.N."/>
            <person name="Goldstraw P."/>
            <person name="Nicholson A.G."/>
            <person name="Brasseur F."/>
            <person name="Looijenga L."/>
            <person name="Weber B.L."/>
            <person name="Chiew Y.-E."/>
            <person name="DeFazio A."/>
            <person name="Greaves M.F."/>
            <person name="Green A.R."/>
            <person name="Campbell P."/>
            <person name="Birney E."/>
            <person name="Easton D.F."/>
            <person name="Chenevix-Trench G."/>
            <person name="Tan M.-H."/>
            <person name="Khoo S.K."/>
            <person name="Teh B.T."/>
            <person name="Yuen S.T."/>
            <person name="Leung S.Y."/>
            <person name="Wooster R."/>
            <person name="Futreal P.A."/>
            <person name="Stratton M.R."/>
        </authorList>
    </citation>
    <scope>VARIANT [LARGE SCALE ANALYSIS] PRO-679</scope>
</reference>
<comment type="function">
    <text evidence="1 2 7 12 13 18 21 22 23 24 25">Dual-specificity kinase which possesses both serine/threonine and tyrosine kinase activities (PubMed:20981014, PubMed:21127067, PubMed:23665168, PubMed:30773093, PubMed:8769099). Exhibits a substrate preference for proline at position P+1 and arginine at position P-3 (PubMed:23665168). Plays an important role in double-strand breaks (DSBs) repair following DNA damage (PubMed:31024071). Mechanistically, phosphorylates RNF169 and increases its ability to block accumulation of TP53BP1 at the DSB sites thereby promoting homologous recombination repair (HRR) (PubMed:30773093). Also acts as a positive regulator of transcription by acting as a CTD kinase that mediates phosphorylation of the CTD (C-terminal domain) of the large subunit of RNA polymerase II (RNAP II) POLR2A (PubMed:25620562, PubMed:29849146). May play a role in a signaling pathway regulating nuclear functions of cell proliferation (PubMed:14500717). Modulates alternative splicing by phosphorylating the splice factor SRSF6 (By similarity). Has pro-survival function and negatively regulates the apoptotic process (By similarity). Promotes cell survival upon genotoxic stress through phosphorylation of SIRT1 (By similarity). This in turn inhibits p53/TP53 activity and apoptosis (By similarity). Phosphorylates SEPTIN4, SEPTIN5 and SF3B1 at 'Thr-434' (By similarity).</text>
</comment>
<comment type="catalytic activity">
    <reaction evidence="12 15 18 20 23">
        <text>L-seryl-[protein] + ATP = O-phospho-L-seryl-[protein] + ADP + H(+)</text>
        <dbReference type="Rhea" id="RHEA:17989"/>
        <dbReference type="Rhea" id="RHEA-COMP:9863"/>
        <dbReference type="Rhea" id="RHEA-COMP:11604"/>
        <dbReference type="ChEBI" id="CHEBI:15378"/>
        <dbReference type="ChEBI" id="CHEBI:29999"/>
        <dbReference type="ChEBI" id="CHEBI:30616"/>
        <dbReference type="ChEBI" id="CHEBI:83421"/>
        <dbReference type="ChEBI" id="CHEBI:456216"/>
        <dbReference type="EC" id="2.7.12.1"/>
    </reaction>
</comment>
<comment type="catalytic activity">
    <reaction evidence="12 15 18 20">
        <text>L-threonyl-[protein] + ATP = O-phospho-L-threonyl-[protein] + ADP + H(+)</text>
        <dbReference type="Rhea" id="RHEA:46608"/>
        <dbReference type="Rhea" id="RHEA-COMP:11060"/>
        <dbReference type="Rhea" id="RHEA-COMP:11605"/>
        <dbReference type="ChEBI" id="CHEBI:15378"/>
        <dbReference type="ChEBI" id="CHEBI:30013"/>
        <dbReference type="ChEBI" id="CHEBI:30616"/>
        <dbReference type="ChEBI" id="CHEBI:61977"/>
        <dbReference type="ChEBI" id="CHEBI:456216"/>
        <dbReference type="EC" id="2.7.12.1"/>
    </reaction>
</comment>
<comment type="catalytic activity">
    <reaction evidence="12 15 18 20">
        <text>L-tyrosyl-[protein] + ATP = O-phospho-L-tyrosyl-[protein] + ADP + H(+)</text>
        <dbReference type="Rhea" id="RHEA:10596"/>
        <dbReference type="Rhea" id="RHEA-COMP:10136"/>
        <dbReference type="Rhea" id="RHEA-COMP:20101"/>
        <dbReference type="ChEBI" id="CHEBI:15378"/>
        <dbReference type="ChEBI" id="CHEBI:30616"/>
        <dbReference type="ChEBI" id="CHEBI:46858"/>
        <dbReference type="ChEBI" id="CHEBI:61978"/>
        <dbReference type="ChEBI" id="CHEBI:456216"/>
        <dbReference type="EC" id="2.7.12.1"/>
    </reaction>
</comment>
<comment type="catalytic activity">
    <reaction evidence="21">
        <text>[DNA-directed RNA polymerase] + ATP = phospho-[DNA-directed RNA polymerase] + ADP + H(+)</text>
        <dbReference type="Rhea" id="RHEA:10216"/>
        <dbReference type="Rhea" id="RHEA-COMP:11321"/>
        <dbReference type="Rhea" id="RHEA-COMP:11322"/>
        <dbReference type="ChEBI" id="CHEBI:15378"/>
        <dbReference type="ChEBI" id="CHEBI:30616"/>
        <dbReference type="ChEBI" id="CHEBI:43176"/>
        <dbReference type="ChEBI" id="CHEBI:68546"/>
        <dbReference type="ChEBI" id="CHEBI:456216"/>
        <dbReference type="EC" id="2.7.11.23"/>
    </reaction>
    <physiologicalReaction direction="left-to-right" evidence="21">
        <dbReference type="Rhea" id="RHEA:10217"/>
    </physiologicalReaction>
</comment>
<comment type="activity regulation">
    <text evidence="7 15">Inhibited by RANBP9 (PubMed:14500717). Inhibited by harmine, leucettamine B and leucettine L41 (PubMed:22998443).</text>
</comment>
<comment type="subunit">
    <text evidence="1 7 8">Interacts with RAD54L2/ARIP4 (By similarity). Interacts with CRY2 (By similarity). Interacts with RANBP9 (PubMed:14500717). Interacts with WDR68 (PubMed:14593110). Interacts with SIRT1 (By similarity).</text>
</comment>
<comment type="subunit">
    <text evidence="19">(Microbial infection) Interacts with human adenovirus 5 E1A protein (PubMed:23864635).</text>
</comment>
<comment type="interaction">
    <interactant intactId="EBI-1053596">
        <id>Q13627</id>
    </interactant>
    <interactant intactId="EBI-359808">
        <id>P61962</id>
        <label>DCAF7</label>
    </interactant>
    <organismsDiffer>false</organismsDiffer>
    <experiments>14</experiments>
</comment>
<comment type="interaction">
    <interactant intactId="EBI-1053596">
        <id>Q13627</id>
    </interactant>
    <interactant intactId="EBI-349105">
        <id>P63167</id>
        <label>DYNLL1</label>
    </interactant>
    <organismsDiffer>false</organismsDiffer>
    <experiments>5</experiments>
</comment>
<comment type="interaction">
    <interactant intactId="EBI-1053596">
        <id>Q13627</id>
    </interactant>
    <interactant intactId="EBI-11285353">
        <id>Q12926</id>
        <label>ELAVL2</label>
    </interactant>
    <organismsDiffer>false</organismsDiffer>
    <experiments>3</experiments>
</comment>
<comment type="interaction">
    <interactant intactId="EBI-1053596">
        <id>Q13627</id>
    </interactant>
    <interactant intactId="EBI-749673">
        <id>Q14576</id>
        <label>ELAVL3</label>
    </interactant>
    <organismsDiffer>false</organismsDiffer>
    <experiments>3</experiments>
</comment>
<comment type="interaction">
    <interactant intactId="EBI-1053596">
        <id>Q13627</id>
    </interactant>
    <interactant intactId="EBI-1644252">
        <id>Q9NYF3</id>
        <label>FAM53C</label>
    </interactant>
    <organismsDiffer>false</organismsDiffer>
    <experiments>5</experiments>
</comment>
<comment type="interaction">
    <interactant intactId="EBI-1053596">
        <id>Q13627</id>
    </interactant>
    <interactant intactId="EBI-366305">
        <id>Q06787</id>
        <label>FMR1</label>
    </interactant>
    <organismsDiffer>false</organismsDiffer>
    <experiments>3</experiments>
</comment>
<comment type="interaction">
    <interactant intactId="EBI-1053596">
        <id>Q13627</id>
    </interactant>
    <interactant intactId="EBI-1053892">
        <id>Q9NZI8</id>
        <label>IGF2BP1</label>
    </interactant>
    <organismsDiffer>false</organismsDiffer>
    <experiments>3</experiments>
</comment>
<comment type="interaction">
    <interactant intactId="EBI-1053596">
        <id>Q13627</id>
    </interactant>
    <interactant intactId="EBI-1024419">
        <id>Q9Y6M1</id>
        <label>IGF2BP2</label>
    </interactant>
    <organismsDiffer>false</organismsDiffer>
    <experiments>3</experiments>
</comment>
<comment type="interaction">
    <interactant intactId="EBI-1053596">
        <id>Q13627</id>
    </interactant>
    <interactant intactId="EBI-1058566">
        <id>O00425</id>
        <label>IGF2BP3</label>
    </interactant>
    <organismsDiffer>false</organismsDiffer>
    <experiments>3</experiments>
</comment>
<comment type="interaction">
    <interactant intactId="EBI-1053596">
        <id>Q13627</id>
    </interactant>
    <interactant intactId="EBI-10981970">
        <id>Q5T749</id>
        <label>KPRP</label>
    </interactant>
    <organismsDiffer>false</organismsDiffer>
    <experiments>3</experiments>
</comment>
<comment type="interaction">
    <interactant intactId="EBI-1053596">
        <id>Q13627</id>
    </interactant>
    <interactant intactId="EBI-741037">
        <id>Q9BRK4</id>
        <label>LZTS2</label>
    </interactant>
    <organismsDiffer>false</organismsDiffer>
    <experiments>6</experiments>
</comment>
<comment type="interaction">
    <interactant intactId="EBI-1053596">
        <id>Q13627</id>
    </interactant>
    <interactant intactId="EBI-491274">
        <id>P06400</id>
        <label>RB1</label>
    </interactant>
    <organismsDiffer>false</organismsDiffer>
    <experiments>4</experiments>
</comment>
<comment type="interaction">
    <interactant intactId="EBI-1053596">
        <id>Q13627</id>
    </interactant>
    <interactant intactId="EBI-971402">
        <id>P28749</id>
        <label>RBL1</label>
    </interactant>
    <organismsDiffer>false</organismsDiffer>
    <experiments>4</experiments>
</comment>
<comment type="interaction">
    <interactant intactId="EBI-1053596">
        <id>Q13627</id>
    </interactant>
    <interactant intactId="EBI-743747">
        <id>Q01826</id>
        <label>SATB1</label>
    </interactant>
    <organismsDiffer>false</organismsDiffer>
    <experiments>2</experiments>
</comment>
<comment type="interaction">
    <interactant intactId="EBI-1053596">
        <id>Q13627</id>
    </interactant>
    <interactant intactId="EBI-355744">
        <id>Q12933</id>
        <label>TRAF2</label>
    </interactant>
    <organismsDiffer>false</organismsDiffer>
    <experiments>3</experiments>
</comment>
<comment type="interaction">
    <interactant intactId="EBI-1053596">
        <id>Q13627</id>
    </interactant>
    <interactant intactId="EBI-308443">
        <id>Q14669</id>
        <label>TRIP12</label>
    </interactant>
    <organismsDiffer>false</organismsDiffer>
    <experiments>2</experiments>
</comment>
<comment type="interaction">
    <interactant intactId="EBI-1053596">
        <id>Q13627</id>
    </interactant>
    <interactant intactId="EBI-2349743">
        <id>Q12815</id>
        <label>TROAP</label>
    </interactant>
    <organismsDiffer>false</organismsDiffer>
    <experiments>4</experiments>
</comment>
<comment type="interaction">
    <interactant intactId="EBI-1053596">
        <id>Q13627</id>
    </interactant>
    <interactant intactId="EBI-946185">
        <id>Q70EL1</id>
        <label>USP54</label>
    </interactant>
    <organismsDiffer>false</organismsDiffer>
    <experiments>3</experiments>
</comment>
<comment type="interaction">
    <interactant intactId="EBI-1053596">
        <id>Q13627</id>
    </interactant>
    <interactant intactId="EBI-765834">
        <id>Q9ULU4</id>
        <label>ZMYND8</label>
    </interactant>
    <organismsDiffer>false</organismsDiffer>
    <experiments>2</experiments>
</comment>
<comment type="interaction">
    <interactant intactId="EBI-1053617">
        <id>Q13627-1</id>
    </interactant>
    <interactant intactId="EBI-1053617">
        <id>Q13627-1</id>
        <label>DYRK1A</label>
    </interactant>
    <organismsDiffer>false</organismsDiffer>
    <experiments>2</experiments>
</comment>
<comment type="interaction">
    <interactant intactId="EBI-1053621">
        <id>Q13627-2</id>
    </interactant>
    <interactant intactId="EBI-359815">
        <id>P31946</id>
        <label>YWHAB</label>
    </interactant>
    <organismsDiffer>false</organismsDiffer>
    <experiments>3</experiments>
</comment>
<comment type="subcellular location">
    <subcellularLocation>
        <location evidence="11 17 21">Nucleus</location>
    </subcellularLocation>
    <subcellularLocation>
        <location evidence="1">Nucleus speckle</location>
    </subcellularLocation>
</comment>
<comment type="alternative products">
    <event type="alternative splicing"/>
    <isoform>
        <id>Q13627-1</id>
        <name>Long</name>
        <sequence type="displayed"/>
    </isoform>
    <isoform>
        <id>Q13627-2</id>
        <name>1</name>
        <sequence type="described" ref="VSP_004917"/>
    </isoform>
    <isoform>
        <id>Q13627-3</id>
        <name>2</name>
        <sequence type="described" ref="VSP_004918 VSP_004919"/>
    </isoform>
    <isoform>
        <id>Q13627-4</id>
        <name>3</name>
        <sequence type="described" ref="VSP_004920 VSP_004921"/>
    </isoform>
    <isoform>
        <id>Q13627-5</id>
        <name>4</name>
        <sequence type="described" ref="VSP_004922 VSP_004923"/>
    </isoform>
    <text>Additional isoforms seem to exist.</text>
</comment>
<comment type="tissue specificity">
    <text evidence="6 25 26 27">Ubiquitous. Highest levels in skeletal muscle, testis, fetal lung and fetal kidney.</text>
</comment>
<comment type="developmental stage">
    <text evidence="25">Expressed in the developing central nervous system. Overexpressed 1.5-fold in fetal Down syndrome brain.</text>
</comment>
<comment type="domain">
    <text evidence="10">The polyhistidine repeats act as targeting signals to nuclear speckles.</text>
</comment>
<comment type="domain">
    <text evidence="22">The histidine-rich domain (HRD) region is intrinsically disordered and promotes the formation of phase-separated liquid droplets that enhance its ability to phosphorylate the CTD (C-terminal domain) of the large subunit of RNA polymerase II (RNA Pol II).</text>
</comment>
<comment type="PTM">
    <text evidence="18">Autophosphorylated on numerous tyrosine residues. Can also autophosphorylate on serine and threonine residues (in vitro).</text>
</comment>
<comment type="disease" evidence="14 16">
    <disease id="DI-03186">
        <name>Intellectual developmental disorder, autosomal dominant 7</name>
        <acronym>MRD7</acronym>
        <description>A disease characterized by primary microcephaly, severe intellectual disability without speech, anxious autistic behavior, and dysmorphic features, including bitemporal narrowing, deep-set eyes, large simple ears, and a pointed nasal tip. Intellectual disability is characterized by significantly below average general intellectual functioning associated with impairments in adaptive behavior and manifested during the developmental period.</description>
        <dbReference type="MIM" id="614104"/>
    </disease>
    <text>The disease is caused by variants affecting the gene represented in this entry.</text>
</comment>
<comment type="similarity">
    <text evidence="34">Belongs to the protein kinase superfamily. CMGC Ser/Thr protein kinase family. MNB/DYRK subfamily.</text>
</comment>
<comment type="online information" name="Atlas of Genetics and Cytogenetics in Oncology and Haematology">
    <link uri="https://atlasgeneticsoncology.org/gene/43234/DYRK1A"/>
</comment>
<dbReference type="EC" id="2.7.11.23" evidence="21"/>
<dbReference type="EC" id="2.7.12.1" evidence="12 15 18 20 23"/>
<dbReference type="EMBL" id="U58496">
    <property type="protein sequence ID" value="AAC50939.1"/>
    <property type="molecule type" value="mRNA"/>
</dbReference>
<dbReference type="EMBL" id="U52373">
    <property type="protein sequence ID" value="AAB18639.1"/>
    <property type="molecule type" value="mRNA"/>
</dbReference>
<dbReference type="EMBL" id="D85759">
    <property type="protein sequence ID" value="BAA12866.1"/>
    <property type="molecule type" value="mRNA"/>
</dbReference>
<dbReference type="EMBL" id="D86550">
    <property type="protein sequence ID" value="BAA13110.1"/>
    <property type="molecule type" value="mRNA"/>
</dbReference>
<dbReference type="EMBL" id="AF108830">
    <property type="protein sequence ID" value="AAD31169.1"/>
    <property type="molecule type" value="mRNA"/>
</dbReference>
<dbReference type="EMBL" id="AJ001870">
    <property type="protein sequence ID" value="CAA05059.1"/>
    <property type="molecule type" value="mRNA"/>
</dbReference>
<dbReference type="CCDS" id="CCDS13653.1">
    <molecule id="Q13627-2"/>
</dbReference>
<dbReference type="CCDS" id="CCDS13654.1">
    <molecule id="Q13627-3"/>
</dbReference>
<dbReference type="CCDS" id="CCDS42925.1">
    <molecule id="Q13627-1"/>
</dbReference>
<dbReference type="CCDS" id="CCDS42926.1">
    <molecule id="Q13627-5"/>
</dbReference>
<dbReference type="PIR" id="JC4898">
    <property type="entry name" value="JC4898"/>
</dbReference>
<dbReference type="RefSeq" id="NP_001334650.1">
    <molecule id="Q13627-2"/>
    <property type="nucleotide sequence ID" value="NM_001347721.2"/>
</dbReference>
<dbReference type="RefSeq" id="NP_001334651.1">
    <molecule id="Q13627-2"/>
    <property type="nucleotide sequence ID" value="NM_001347722.2"/>
</dbReference>
<dbReference type="RefSeq" id="NP_001387.2">
    <molecule id="Q13627-1"/>
    <property type="nucleotide sequence ID" value="NM_001396.4"/>
</dbReference>
<dbReference type="RefSeq" id="NP_567824.1">
    <molecule id="Q13627-5"/>
    <property type="nucleotide sequence ID" value="NM_101395.2"/>
</dbReference>
<dbReference type="RefSeq" id="NP_569120.1">
    <molecule id="Q13627-2"/>
    <property type="nucleotide sequence ID" value="NM_130436.2"/>
</dbReference>
<dbReference type="RefSeq" id="NP_569122.1">
    <molecule id="Q13627-3"/>
    <property type="nucleotide sequence ID" value="NM_130438.2"/>
</dbReference>
<dbReference type="RefSeq" id="XP_006724039.1">
    <property type="nucleotide sequence ID" value="XM_006723976.3"/>
</dbReference>
<dbReference type="RefSeq" id="XP_006724040.1">
    <property type="nucleotide sequence ID" value="XM_006723977.3"/>
</dbReference>
<dbReference type="RefSeq" id="XP_006724041.1">
    <property type="nucleotide sequence ID" value="XM_006723978.3"/>
</dbReference>
<dbReference type="RefSeq" id="XP_011527785.1">
    <property type="nucleotide sequence ID" value="XM_011529483.2"/>
</dbReference>
<dbReference type="RefSeq" id="XP_016883773.1">
    <property type="nucleotide sequence ID" value="XM_017028284.1"/>
</dbReference>
<dbReference type="PDB" id="2VX3">
    <property type="method" value="X-ray"/>
    <property type="resolution" value="2.40 A"/>
    <property type="chains" value="A/B/C/D=127-485"/>
</dbReference>
<dbReference type="PDB" id="2WO6">
    <property type="method" value="X-ray"/>
    <property type="resolution" value="2.50 A"/>
    <property type="chains" value="A/B=127-485"/>
</dbReference>
<dbReference type="PDB" id="3ANQ">
    <property type="method" value="X-ray"/>
    <property type="resolution" value="2.60 A"/>
    <property type="chains" value="A/B/C/D=126-490"/>
</dbReference>
<dbReference type="PDB" id="3ANR">
    <property type="method" value="X-ray"/>
    <property type="resolution" value="2.60 A"/>
    <property type="chains" value="A/B/C/D=126-490"/>
</dbReference>
<dbReference type="PDB" id="4AZE">
    <property type="method" value="X-ray"/>
    <property type="resolution" value="3.15 A"/>
    <property type="chains" value="A/B/C=128-485"/>
</dbReference>
<dbReference type="PDB" id="4MQ1">
    <property type="method" value="X-ray"/>
    <property type="resolution" value="2.35 A"/>
    <property type="chains" value="A/B/C/D=127-485"/>
</dbReference>
<dbReference type="PDB" id="4MQ2">
    <property type="method" value="X-ray"/>
    <property type="resolution" value="2.80 A"/>
    <property type="chains" value="A/B/C/D=127-485"/>
</dbReference>
<dbReference type="PDB" id="4NCT">
    <property type="method" value="X-ray"/>
    <property type="resolution" value="2.60 A"/>
    <property type="chains" value="A/B/C/D=126-490"/>
</dbReference>
<dbReference type="PDB" id="4YLJ">
    <property type="method" value="X-ray"/>
    <property type="resolution" value="2.58 A"/>
    <property type="chains" value="A/B/C/D=127-485"/>
</dbReference>
<dbReference type="PDB" id="4YLK">
    <property type="method" value="X-ray"/>
    <property type="resolution" value="1.40 A"/>
    <property type="chains" value="A=127-485"/>
</dbReference>
<dbReference type="PDB" id="4YLL">
    <property type="method" value="X-ray"/>
    <property type="resolution" value="1.40 A"/>
    <property type="chains" value="A=127-485"/>
</dbReference>
<dbReference type="PDB" id="4YU2">
    <property type="method" value="X-ray"/>
    <property type="resolution" value="2.90 A"/>
    <property type="chains" value="A/B/C/D=127-485"/>
</dbReference>
<dbReference type="PDB" id="5A3X">
    <property type="method" value="X-ray"/>
    <property type="resolution" value="2.26 A"/>
    <property type="chains" value="A/B/C/D=126-490"/>
</dbReference>
<dbReference type="PDB" id="5A4E">
    <property type="method" value="X-ray"/>
    <property type="resolution" value="2.68 A"/>
    <property type="chains" value="A/B/C/D=126-490"/>
</dbReference>
<dbReference type="PDB" id="5A4L">
    <property type="method" value="X-ray"/>
    <property type="resolution" value="2.73 A"/>
    <property type="chains" value="A/B/C/D=126-490"/>
</dbReference>
<dbReference type="PDB" id="5A4Q">
    <property type="method" value="X-ray"/>
    <property type="resolution" value="2.37 A"/>
    <property type="chains" value="A/B/C/D=126-490"/>
</dbReference>
<dbReference type="PDB" id="5A4T">
    <property type="method" value="X-ray"/>
    <property type="resolution" value="2.15 A"/>
    <property type="chains" value="A/B/C/D=126-490"/>
</dbReference>
<dbReference type="PDB" id="5A54">
    <property type="method" value="X-ray"/>
    <property type="resolution" value="2.63 A"/>
    <property type="chains" value="A/B/C/D=126-490"/>
</dbReference>
<dbReference type="PDB" id="5AIK">
    <property type="method" value="X-ray"/>
    <property type="resolution" value="2.70 A"/>
    <property type="chains" value="A/B/C/D=128-485"/>
</dbReference>
<dbReference type="PDB" id="6A1F">
    <property type="method" value="X-ray"/>
    <property type="resolution" value="1.50 A"/>
    <property type="chains" value="A=127-483"/>
</dbReference>
<dbReference type="PDB" id="6A1G">
    <property type="method" value="X-ray"/>
    <property type="resolution" value="2.15 A"/>
    <property type="chains" value="A/B=127-483"/>
</dbReference>
<dbReference type="PDB" id="6EIF">
    <property type="method" value="X-ray"/>
    <property type="resolution" value="2.22 A"/>
    <property type="chains" value="A/B/C/D=126-490"/>
</dbReference>
<dbReference type="PDB" id="6EIJ">
    <property type="method" value="X-ray"/>
    <property type="resolution" value="2.42 A"/>
    <property type="chains" value="A/B/C/D=126-490"/>
</dbReference>
<dbReference type="PDB" id="6EIL">
    <property type="method" value="X-ray"/>
    <property type="resolution" value="2.46 A"/>
    <property type="chains" value="A/B/C/D=126-490"/>
</dbReference>
<dbReference type="PDB" id="6EIP">
    <property type="method" value="X-ray"/>
    <property type="resolution" value="2.56 A"/>
    <property type="chains" value="A/B/C/D=126-490"/>
</dbReference>
<dbReference type="PDB" id="6EIQ">
    <property type="method" value="X-ray"/>
    <property type="resolution" value="2.30 A"/>
    <property type="chains" value="A/B/C/D=126-490"/>
</dbReference>
<dbReference type="PDB" id="6EIR">
    <property type="method" value="X-ray"/>
    <property type="resolution" value="2.40 A"/>
    <property type="chains" value="A/B/C/D=126-490"/>
</dbReference>
<dbReference type="PDB" id="6EIS">
    <property type="method" value="X-ray"/>
    <property type="resolution" value="2.36 A"/>
    <property type="chains" value="A/B/C/D=126-490"/>
</dbReference>
<dbReference type="PDB" id="6EIV">
    <property type="method" value="X-ray"/>
    <property type="resolution" value="2.68 A"/>
    <property type="chains" value="A/B/C/D=126-490"/>
</dbReference>
<dbReference type="PDB" id="6EJ4">
    <property type="method" value="X-ray"/>
    <property type="resolution" value="2.88 A"/>
    <property type="chains" value="A/B/C/D=126-490"/>
</dbReference>
<dbReference type="PDB" id="6LN1">
    <property type="method" value="X-ray"/>
    <property type="resolution" value="2.70 A"/>
    <property type="chains" value="A/B=135-480"/>
</dbReference>
<dbReference type="PDB" id="6QU2">
    <property type="method" value="X-ray"/>
    <property type="resolution" value="2.90 A"/>
    <property type="chains" value="A/B/C/D=127-485"/>
</dbReference>
<dbReference type="PDB" id="6S11">
    <property type="method" value="X-ray"/>
    <property type="resolution" value="2.44 A"/>
    <property type="chains" value="A/B=127-485"/>
</dbReference>
<dbReference type="PDB" id="6S14">
    <property type="method" value="X-ray"/>
    <property type="resolution" value="1.05 A"/>
    <property type="chains" value="A=127-485"/>
</dbReference>
<dbReference type="PDB" id="6S17">
    <property type="method" value="X-ray"/>
    <property type="resolution" value="1.10 A"/>
    <property type="chains" value="A=127-485"/>
</dbReference>
<dbReference type="PDB" id="6S1B">
    <property type="method" value="X-ray"/>
    <property type="resolution" value="1.30 A"/>
    <property type="chains" value="A=127-485"/>
</dbReference>
<dbReference type="PDB" id="6S1H">
    <property type="method" value="X-ray"/>
    <property type="resolution" value="1.05 A"/>
    <property type="chains" value="A=127-485"/>
</dbReference>
<dbReference type="PDB" id="6S1I">
    <property type="method" value="X-ray"/>
    <property type="resolution" value="2.38 A"/>
    <property type="chains" value="A/B/C/D=127-485"/>
</dbReference>
<dbReference type="PDB" id="6S1J">
    <property type="method" value="X-ray"/>
    <property type="resolution" value="1.41 A"/>
    <property type="chains" value="A=127-485"/>
</dbReference>
<dbReference type="PDB" id="6T6A">
    <property type="method" value="X-ray"/>
    <property type="resolution" value="2.80 A"/>
    <property type="chains" value="A/B/C/D=127-485"/>
</dbReference>
<dbReference type="PDB" id="6UIP">
    <property type="method" value="X-ray"/>
    <property type="resolution" value="3.70 A"/>
    <property type="chains" value="A/B/C=127-485"/>
</dbReference>
<dbReference type="PDB" id="6UWY">
    <property type="method" value="X-ray"/>
    <property type="resolution" value="2.95 A"/>
    <property type="chains" value="A/B/C/D=127-485"/>
</dbReference>
<dbReference type="PDB" id="6YF8">
    <property type="method" value="X-ray"/>
    <property type="resolution" value="3.20 A"/>
    <property type="chains" value="A/B/C/D=126-490"/>
</dbReference>
<dbReference type="PDB" id="7A4O">
    <property type="method" value="X-ray"/>
    <property type="resolution" value="1.90 A"/>
    <property type="chains" value="A/B=127-485"/>
</dbReference>
<dbReference type="PDB" id="7A4R">
    <property type="method" value="X-ray"/>
    <property type="resolution" value="1.80 A"/>
    <property type="chains" value="A/B=148-479"/>
</dbReference>
<dbReference type="PDB" id="7A4S">
    <property type="method" value="X-ray"/>
    <property type="resolution" value="3.10 A"/>
    <property type="chains" value="A=148-485"/>
</dbReference>
<dbReference type="PDB" id="7A4W">
    <property type="method" value="X-ray"/>
    <property type="resolution" value="2.70 A"/>
    <property type="chains" value="A/B=127-485"/>
</dbReference>
<dbReference type="PDB" id="7A4Z">
    <property type="method" value="X-ray"/>
    <property type="resolution" value="1.90 A"/>
    <property type="chains" value="A=148-485"/>
</dbReference>
<dbReference type="PDB" id="7A51">
    <property type="method" value="X-ray"/>
    <property type="resolution" value="1.90 A"/>
    <property type="chains" value="A=148-485"/>
</dbReference>
<dbReference type="PDB" id="7A52">
    <property type="method" value="X-ray"/>
    <property type="resolution" value="2.10 A"/>
    <property type="chains" value="A/B=148-479"/>
</dbReference>
<dbReference type="PDB" id="7A53">
    <property type="method" value="X-ray"/>
    <property type="resolution" value="2.20 A"/>
    <property type="chains" value="A/B=148-485"/>
</dbReference>
<dbReference type="PDB" id="7A55">
    <property type="method" value="X-ray"/>
    <property type="resolution" value="2.20 A"/>
    <property type="chains" value="A/B=127-485"/>
</dbReference>
<dbReference type="PDB" id="7A5B">
    <property type="method" value="X-ray"/>
    <property type="resolution" value="2.60 A"/>
    <property type="chains" value="A/B=127-485"/>
</dbReference>
<dbReference type="PDB" id="7A5D">
    <property type="method" value="X-ray"/>
    <property type="resolution" value="1.80 A"/>
    <property type="chains" value="A=148-485"/>
</dbReference>
<dbReference type="PDB" id="7A5L">
    <property type="method" value="X-ray"/>
    <property type="resolution" value="2.10 A"/>
    <property type="chains" value="A=148-485"/>
</dbReference>
<dbReference type="PDB" id="7A5N">
    <property type="method" value="X-ray"/>
    <property type="resolution" value="2.30 A"/>
    <property type="chains" value="A/B=148-485"/>
</dbReference>
<dbReference type="PDB" id="7AJ2">
    <property type="method" value="X-ray"/>
    <property type="resolution" value="2.10 A"/>
    <property type="chains" value="A=148-485"/>
</dbReference>
<dbReference type="PDB" id="7AJ4">
    <property type="method" value="X-ray"/>
    <property type="resolution" value="2.00 A"/>
    <property type="chains" value="A=148-485"/>
</dbReference>
<dbReference type="PDB" id="7AJ5">
    <property type="method" value="X-ray"/>
    <property type="resolution" value="2.00 A"/>
    <property type="chains" value="A=148-485"/>
</dbReference>
<dbReference type="PDB" id="7AJ7">
    <property type="method" value="X-ray"/>
    <property type="resolution" value="2.90 A"/>
    <property type="chains" value="A=148-485"/>
</dbReference>
<dbReference type="PDB" id="7AJ8">
    <property type="method" value="X-ray"/>
    <property type="resolution" value="2.00 A"/>
    <property type="chains" value="A=148-485"/>
</dbReference>
<dbReference type="PDB" id="7AJA">
    <property type="method" value="X-ray"/>
    <property type="resolution" value="2.20 A"/>
    <property type="chains" value="A=148-485"/>
</dbReference>
<dbReference type="PDB" id="7AJM">
    <property type="method" value="X-ray"/>
    <property type="resolution" value="2.40 A"/>
    <property type="chains" value="A/B=148-479"/>
</dbReference>
<dbReference type="PDB" id="7AJS">
    <property type="method" value="X-ray"/>
    <property type="resolution" value="2.15 A"/>
    <property type="chains" value="A/B=148-479"/>
</dbReference>
<dbReference type="PDB" id="7AJV">
    <property type="method" value="X-ray"/>
    <property type="resolution" value="2.10 A"/>
    <property type="chains" value="A/B=148-485"/>
</dbReference>
<dbReference type="PDB" id="7AJW">
    <property type="method" value="X-ray"/>
    <property type="resolution" value="2.80 A"/>
    <property type="chains" value="A=148-485"/>
</dbReference>
<dbReference type="PDB" id="7AJY">
    <property type="method" value="X-ray"/>
    <property type="resolution" value="2.20 A"/>
    <property type="chains" value="A/B=148-485"/>
</dbReference>
<dbReference type="PDB" id="7AK2">
    <property type="method" value="X-ray"/>
    <property type="resolution" value="2.10 A"/>
    <property type="chains" value="A/B=148-485"/>
</dbReference>
<dbReference type="PDB" id="7AKA">
    <property type="method" value="X-ray"/>
    <property type="resolution" value="1.90 A"/>
    <property type="chains" value="A/B=148-485"/>
</dbReference>
<dbReference type="PDB" id="7AKB">
    <property type="method" value="X-ray"/>
    <property type="resolution" value="2.80 A"/>
    <property type="chains" value="A/B=148-485"/>
</dbReference>
<dbReference type="PDB" id="7AKE">
    <property type="method" value="X-ray"/>
    <property type="resolution" value="2.30 A"/>
    <property type="chains" value="A/B=148-485"/>
</dbReference>
<dbReference type="PDB" id="7AKL">
    <property type="method" value="X-ray"/>
    <property type="resolution" value="2.00 A"/>
    <property type="chains" value="A=148-485"/>
</dbReference>
<dbReference type="PDB" id="7FHS">
    <property type="method" value="X-ray"/>
    <property type="resolution" value="2.42 A"/>
    <property type="chains" value="A/B/C/D=127-485"/>
</dbReference>
<dbReference type="PDB" id="7FHT">
    <property type="method" value="X-ray"/>
    <property type="resolution" value="2.68 A"/>
    <property type="chains" value="A/B/C/D=127-485"/>
</dbReference>
<dbReference type="PDB" id="7O7K">
    <property type="method" value="X-ray"/>
    <property type="resolution" value="1.82 A"/>
    <property type="chains" value="A/B=127-485"/>
</dbReference>
<dbReference type="PDB" id="7OY6">
    <property type="method" value="X-ray"/>
    <property type="resolution" value="2.38 A"/>
    <property type="chains" value="C=127-485"/>
</dbReference>
<dbReference type="PDB" id="7Z5N">
    <property type="method" value="X-ray"/>
    <property type="resolution" value="2.77 A"/>
    <property type="chains" value="A/B/C/D/E/F/G/H=126-489"/>
</dbReference>
<dbReference type="PDB" id="7ZH8">
    <property type="method" value="X-ray"/>
    <property type="resolution" value="2.30 A"/>
    <property type="chains" value="A/B/C/D=127-485"/>
</dbReference>
<dbReference type="PDB" id="8C3G">
    <property type="method" value="X-ray"/>
    <property type="resolution" value="2.08 A"/>
    <property type="chains" value="A/B/C/D=126-489"/>
</dbReference>
<dbReference type="PDB" id="8C3Q">
    <property type="method" value="X-ray"/>
    <property type="resolution" value="2.32 A"/>
    <property type="chains" value="A/B=126-489"/>
</dbReference>
<dbReference type="PDB" id="8C3R">
    <property type="method" value="X-ray"/>
    <property type="resolution" value="2.06 A"/>
    <property type="chains" value="A/B=126-489"/>
</dbReference>
<dbReference type="PDB" id="8R8E">
    <property type="method" value="X-ray"/>
    <property type="resolution" value="2.22 A"/>
    <property type="chains" value="A/B/C/D=127-485"/>
</dbReference>
<dbReference type="PDB" id="8T2H">
    <property type="method" value="X-ray"/>
    <property type="resolution" value="1.85 A"/>
    <property type="chains" value="A/B=126-490"/>
</dbReference>
<dbReference type="PDB" id="8YEV">
    <property type="method" value="X-ray"/>
    <property type="resolution" value="2.25 A"/>
    <property type="chains" value="A/B=134-481"/>
</dbReference>
<dbReference type="PDBsum" id="2VX3"/>
<dbReference type="PDBsum" id="2WO6"/>
<dbReference type="PDBsum" id="3ANQ"/>
<dbReference type="PDBsum" id="3ANR"/>
<dbReference type="PDBsum" id="4AZE"/>
<dbReference type="PDBsum" id="4MQ1"/>
<dbReference type="PDBsum" id="4MQ2"/>
<dbReference type="PDBsum" id="4NCT"/>
<dbReference type="PDBsum" id="4YLJ"/>
<dbReference type="PDBsum" id="4YLK"/>
<dbReference type="PDBsum" id="4YLL"/>
<dbReference type="PDBsum" id="4YU2"/>
<dbReference type="PDBsum" id="5A3X"/>
<dbReference type="PDBsum" id="5A4E"/>
<dbReference type="PDBsum" id="5A4L"/>
<dbReference type="PDBsum" id="5A4Q"/>
<dbReference type="PDBsum" id="5A4T"/>
<dbReference type="PDBsum" id="5A54"/>
<dbReference type="PDBsum" id="5AIK"/>
<dbReference type="PDBsum" id="6A1F"/>
<dbReference type="PDBsum" id="6A1G"/>
<dbReference type="PDBsum" id="6EIF"/>
<dbReference type="PDBsum" id="6EIJ"/>
<dbReference type="PDBsum" id="6EIL"/>
<dbReference type="PDBsum" id="6EIP"/>
<dbReference type="PDBsum" id="6EIQ"/>
<dbReference type="PDBsum" id="6EIR"/>
<dbReference type="PDBsum" id="6EIS"/>
<dbReference type="PDBsum" id="6EIV"/>
<dbReference type="PDBsum" id="6EJ4"/>
<dbReference type="PDBsum" id="6LN1"/>
<dbReference type="PDBsum" id="6QU2"/>
<dbReference type="PDBsum" id="6S11"/>
<dbReference type="PDBsum" id="6S14"/>
<dbReference type="PDBsum" id="6S17"/>
<dbReference type="PDBsum" id="6S1B"/>
<dbReference type="PDBsum" id="6S1H"/>
<dbReference type="PDBsum" id="6S1I"/>
<dbReference type="PDBsum" id="6S1J"/>
<dbReference type="PDBsum" id="6T6A"/>
<dbReference type="PDBsum" id="6UIP"/>
<dbReference type="PDBsum" id="6UWY"/>
<dbReference type="PDBsum" id="6YF8"/>
<dbReference type="PDBsum" id="7A4O"/>
<dbReference type="PDBsum" id="7A4R"/>
<dbReference type="PDBsum" id="7A4S"/>
<dbReference type="PDBsum" id="7A4W"/>
<dbReference type="PDBsum" id="7A4Z"/>
<dbReference type="PDBsum" id="7A51"/>
<dbReference type="PDBsum" id="7A52"/>
<dbReference type="PDBsum" id="7A53"/>
<dbReference type="PDBsum" id="7A55"/>
<dbReference type="PDBsum" id="7A5B"/>
<dbReference type="PDBsum" id="7A5D"/>
<dbReference type="PDBsum" id="7A5L"/>
<dbReference type="PDBsum" id="7A5N"/>
<dbReference type="PDBsum" id="7AJ2"/>
<dbReference type="PDBsum" id="7AJ4"/>
<dbReference type="PDBsum" id="7AJ5"/>
<dbReference type="PDBsum" id="7AJ7"/>
<dbReference type="PDBsum" id="7AJ8"/>
<dbReference type="PDBsum" id="7AJA"/>
<dbReference type="PDBsum" id="7AJM"/>
<dbReference type="PDBsum" id="7AJS"/>
<dbReference type="PDBsum" id="7AJV"/>
<dbReference type="PDBsum" id="7AJW"/>
<dbReference type="PDBsum" id="7AJY"/>
<dbReference type="PDBsum" id="7AK2"/>
<dbReference type="PDBsum" id="7AKA"/>
<dbReference type="PDBsum" id="7AKB"/>
<dbReference type="PDBsum" id="7AKE"/>
<dbReference type="PDBsum" id="7AKL"/>
<dbReference type="PDBsum" id="7FHS"/>
<dbReference type="PDBsum" id="7FHT"/>
<dbReference type="PDBsum" id="7O7K"/>
<dbReference type="PDBsum" id="7OY6"/>
<dbReference type="PDBsum" id="7Z5N"/>
<dbReference type="PDBsum" id="7ZH8"/>
<dbReference type="PDBsum" id="8C3G"/>
<dbReference type="PDBsum" id="8C3Q"/>
<dbReference type="PDBsum" id="8C3R"/>
<dbReference type="PDBsum" id="8R8E"/>
<dbReference type="PDBsum" id="8T2H"/>
<dbReference type="PDBsum" id="8YEV"/>
<dbReference type="SMR" id="Q13627"/>
<dbReference type="BioGRID" id="108192">
    <property type="interactions" value="552"/>
</dbReference>
<dbReference type="DIP" id="DIP-39750N"/>
<dbReference type="ELM" id="Q13627"/>
<dbReference type="FunCoup" id="Q13627">
    <property type="interactions" value="3921"/>
</dbReference>
<dbReference type="IntAct" id="Q13627">
    <property type="interactions" value="765"/>
</dbReference>
<dbReference type="MINT" id="Q13627"/>
<dbReference type="STRING" id="9606.ENSP00000340373"/>
<dbReference type="BindingDB" id="Q13627"/>
<dbReference type="ChEMBL" id="CHEMBL2292"/>
<dbReference type="DrugBank" id="DB02962">
    <property type="generic name" value="Benzimidazole"/>
</dbReference>
<dbReference type="DrugBank" id="DB04719">
    <property type="generic name" value="DIMETHYL-(4,5,6,7-TETRABROMO-1H-BENZOIMIDAZOL-2-YL)-AMINE"/>
</dbReference>
<dbReference type="DrugBank" id="DB08691">
    <property type="generic name" value="ethyl 3-[(E)-2-amino-1-cyanoethenyl]-6,7-dichloro-1-methyl-1H-indole-2-carboxylate"/>
</dbReference>
<dbReference type="DrugBank" id="DB12010">
    <property type="generic name" value="Fostamatinib"/>
</dbReference>
<dbReference type="DrugBank" id="DB07919">
    <property type="generic name" value="Harmine"/>
</dbReference>
<dbReference type="DrugBank" id="DB07608">
    <property type="generic name" value="N-(5-{[(2S)-4-amino-2-(3-chlorophenyl)butanoyl]amino}-1H-indazol-3-yl)benzamide"/>
</dbReference>
<dbReference type="DrugCentral" id="Q13627"/>
<dbReference type="GuidetoPHARMACOLOGY" id="2009"/>
<dbReference type="GlyGen" id="Q13627">
    <property type="glycosylation" value="5 sites, 1 N-linked glycan (1 site), 1 O-linked glycan (4 sites)"/>
</dbReference>
<dbReference type="iPTMnet" id="Q13627"/>
<dbReference type="PhosphoSitePlus" id="Q13627"/>
<dbReference type="BioMuta" id="DYRK1A"/>
<dbReference type="DMDM" id="3219996"/>
<dbReference type="CPTAC" id="CPTAC-2879"/>
<dbReference type="jPOST" id="Q13627"/>
<dbReference type="MassIVE" id="Q13627"/>
<dbReference type="PaxDb" id="9606-ENSP00000381932"/>
<dbReference type="PeptideAtlas" id="Q13627"/>
<dbReference type="ProteomicsDB" id="59619">
    <molecule id="Q13627-1"/>
</dbReference>
<dbReference type="ProteomicsDB" id="59620">
    <molecule id="Q13627-2"/>
</dbReference>
<dbReference type="ProteomicsDB" id="59621">
    <molecule id="Q13627-3"/>
</dbReference>
<dbReference type="ProteomicsDB" id="59622">
    <molecule id="Q13627-4"/>
</dbReference>
<dbReference type="ProteomicsDB" id="59623">
    <molecule id="Q13627-5"/>
</dbReference>
<dbReference type="Pumba" id="Q13627"/>
<dbReference type="Antibodypedia" id="8587">
    <property type="antibodies" value="428 antibodies from 38 providers"/>
</dbReference>
<dbReference type="DNASU" id="1859"/>
<dbReference type="Ensembl" id="ENST00000338785.8">
    <molecule id="Q13627-5"/>
    <property type="protein sequence ID" value="ENSP00000342690.3"/>
    <property type="gene ID" value="ENSG00000157540.22"/>
</dbReference>
<dbReference type="Ensembl" id="ENST00000398956.2">
    <molecule id="Q13627-3"/>
    <property type="protein sequence ID" value="ENSP00000381929.2"/>
    <property type="gene ID" value="ENSG00000157540.22"/>
</dbReference>
<dbReference type="Ensembl" id="ENST00000398960.7">
    <molecule id="Q13627-1"/>
    <property type="protein sequence ID" value="ENSP00000381932.2"/>
    <property type="gene ID" value="ENSG00000157540.22"/>
</dbReference>
<dbReference type="Ensembl" id="ENST00000643624.1">
    <molecule id="Q13627-2"/>
    <property type="protein sequence ID" value="ENSP00000493627.1"/>
    <property type="gene ID" value="ENSG00000157540.22"/>
</dbReference>
<dbReference type="Ensembl" id="ENST00000644942.1">
    <molecule id="Q13627-1"/>
    <property type="protein sequence ID" value="ENSP00000494544.1"/>
    <property type="gene ID" value="ENSG00000157540.22"/>
</dbReference>
<dbReference type="Ensembl" id="ENST00000645424.1">
    <molecule id="Q13627-4"/>
    <property type="protein sequence ID" value="ENSP00000494897.1"/>
    <property type="gene ID" value="ENSG00000157540.22"/>
</dbReference>
<dbReference type="Ensembl" id="ENST00000646548.1">
    <molecule id="Q13627-2"/>
    <property type="protein sequence ID" value="ENSP00000495908.1"/>
    <property type="gene ID" value="ENSG00000157540.22"/>
</dbReference>
<dbReference type="Ensembl" id="ENST00000647188.2">
    <molecule id="Q13627-2"/>
    <property type="protein sequence ID" value="ENSP00000494572.1"/>
    <property type="gene ID" value="ENSG00000157540.22"/>
</dbReference>
<dbReference type="Ensembl" id="ENST00000647425.1">
    <molecule id="Q13627-2"/>
    <property type="protein sequence ID" value="ENSP00000496748.1"/>
    <property type="gene ID" value="ENSG00000157540.22"/>
</dbReference>
<dbReference type="GeneID" id="1859"/>
<dbReference type="KEGG" id="hsa:1859"/>
<dbReference type="MANE-Select" id="ENST00000647188.2">
    <molecule id="Q13627-2"/>
    <property type="protein sequence ID" value="ENSP00000494572.1"/>
    <property type="RefSeq nucleotide sequence ID" value="NM_001347721.2"/>
    <property type="RefSeq protein sequence ID" value="NP_001334650.1"/>
</dbReference>
<dbReference type="UCSC" id="uc002ywi.4">
    <molecule id="Q13627-1"/>
    <property type="organism name" value="human"/>
</dbReference>
<dbReference type="AGR" id="HGNC:3091"/>
<dbReference type="CTD" id="1859"/>
<dbReference type="DisGeNET" id="1859"/>
<dbReference type="GeneCards" id="DYRK1A"/>
<dbReference type="GeneReviews" id="DYRK1A"/>
<dbReference type="HGNC" id="HGNC:3091">
    <property type="gene designation" value="DYRK1A"/>
</dbReference>
<dbReference type="HPA" id="ENSG00000157540">
    <property type="expression patterns" value="Low tissue specificity"/>
</dbReference>
<dbReference type="MalaCards" id="DYRK1A"/>
<dbReference type="MIM" id="600855">
    <property type="type" value="gene"/>
</dbReference>
<dbReference type="MIM" id="614104">
    <property type="type" value="phenotype"/>
</dbReference>
<dbReference type="neXtProt" id="NX_Q13627"/>
<dbReference type="OpenTargets" id="ENSG00000157540"/>
<dbReference type="Orphanet" id="268261">
    <property type="disease" value="DYRK1A-related intellectual disability syndrome due to 21q22.13q22.2 microdeletion"/>
</dbReference>
<dbReference type="Orphanet" id="464311">
    <property type="disease" value="Intellectual disability syndrome due to a DYRK1A point mutation"/>
</dbReference>
<dbReference type="PharmGKB" id="PA27545"/>
<dbReference type="VEuPathDB" id="HostDB:ENSG00000157540"/>
<dbReference type="eggNOG" id="KOG0667">
    <property type="taxonomic scope" value="Eukaryota"/>
</dbReference>
<dbReference type="GeneTree" id="ENSGT00940000157408"/>
<dbReference type="HOGENOM" id="CLU_000288_5_6_1"/>
<dbReference type="InParanoid" id="Q13627"/>
<dbReference type="OMA" id="YNFAEIS"/>
<dbReference type="OrthoDB" id="9332038at2759"/>
<dbReference type="PAN-GO" id="Q13627">
    <property type="GO annotations" value="6 GO annotations based on evolutionary models"/>
</dbReference>
<dbReference type="PhylomeDB" id="Q13627"/>
<dbReference type="TreeFam" id="TF314624"/>
<dbReference type="BRENDA" id="2.7.12.1">
    <property type="organism ID" value="2681"/>
</dbReference>
<dbReference type="PathwayCommons" id="Q13627"/>
<dbReference type="Reactome" id="R-HSA-1538133">
    <property type="pathway name" value="G0 and Early G1"/>
</dbReference>
<dbReference type="SignaLink" id="Q13627"/>
<dbReference type="SIGNOR" id="Q13627"/>
<dbReference type="BioGRID-ORCS" id="1859">
    <property type="hits" value="127 hits in 1228 CRISPR screens"/>
</dbReference>
<dbReference type="CD-CODE" id="0769205F">
    <property type="entry name" value="Synthetic Condensate 000206"/>
</dbReference>
<dbReference type="CD-CODE" id="38EC0B30">
    <property type="entry name" value="Transcriptional condensate"/>
</dbReference>
<dbReference type="CD-CODE" id="804901D1">
    <property type="entry name" value="Nuclear speckle"/>
</dbReference>
<dbReference type="ChiTaRS" id="DYRK1A">
    <property type="organism name" value="human"/>
</dbReference>
<dbReference type="EvolutionaryTrace" id="Q13627"/>
<dbReference type="GeneWiki" id="DYRK1A"/>
<dbReference type="GenomeRNAi" id="1859"/>
<dbReference type="Pharos" id="Q13627">
    <property type="development level" value="Tchem"/>
</dbReference>
<dbReference type="PRO" id="PR:Q13627"/>
<dbReference type="Proteomes" id="UP000005640">
    <property type="component" value="Chromosome 21"/>
</dbReference>
<dbReference type="RNAct" id="Q13627">
    <property type="molecule type" value="protein"/>
</dbReference>
<dbReference type="Bgee" id="ENSG00000157540">
    <property type="expression patterns" value="Expressed in amniotic fluid and 212 other cell types or tissues"/>
</dbReference>
<dbReference type="ExpressionAtlas" id="Q13627">
    <property type="expression patterns" value="baseline and differential"/>
</dbReference>
<dbReference type="GO" id="GO:0030424">
    <property type="term" value="C:axon"/>
    <property type="evidence" value="ECO:0000250"/>
    <property type="project" value="ARUK-UCL"/>
</dbReference>
<dbReference type="GO" id="GO:0005813">
    <property type="term" value="C:centrosome"/>
    <property type="evidence" value="ECO:0000314"/>
    <property type="project" value="HPA"/>
</dbReference>
<dbReference type="GO" id="GO:0005737">
    <property type="term" value="C:cytoplasm"/>
    <property type="evidence" value="ECO:0000314"/>
    <property type="project" value="UniProtKB"/>
</dbReference>
<dbReference type="GO" id="GO:0005829">
    <property type="term" value="C:cytosol"/>
    <property type="evidence" value="ECO:0000314"/>
    <property type="project" value="HPA"/>
</dbReference>
<dbReference type="GO" id="GO:0030425">
    <property type="term" value="C:dendrite"/>
    <property type="evidence" value="ECO:0000250"/>
    <property type="project" value="ARUK-UCL"/>
</dbReference>
<dbReference type="GO" id="GO:0016607">
    <property type="term" value="C:nuclear speck"/>
    <property type="evidence" value="ECO:0000314"/>
    <property type="project" value="HPA"/>
</dbReference>
<dbReference type="GO" id="GO:0005654">
    <property type="term" value="C:nucleoplasm"/>
    <property type="evidence" value="ECO:0000314"/>
    <property type="project" value="HPA"/>
</dbReference>
<dbReference type="GO" id="GO:0005634">
    <property type="term" value="C:nucleus"/>
    <property type="evidence" value="ECO:0000314"/>
    <property type="project" value="UniProtKB"/>
</dbReference>
<dbReference type="GO" id="GO:1990904">
    <property type="term" value="C:ribonucleoprotein complex"/>
    <property type="evidence" value="ECO:0007669"/>
    <property type="project" value="Ensembl"/>
</dbReference>
<dbReference type="GO" id="GO:0003779">
    <property type="term" value="F:actin binding"/>
    <property type="evidence" value="ECO:0000353"/>
    <property type="project" value="ARUK-UCL"/>
</dbReference>
<dbReference type="GO" id="GO:0005524">
    <property type="term" value="F:ATP binding"/>
    <property type="evidence" value="ECO:0007669"/>
    <property type="project" value="UniProtKB-KW"/>
</dbReference>
<dbReference type="GO" id="GO:0008092">
    <property type="term" value="F:cytoskeletal protein binding"/>
    <property type="evidence" value="ECO:0000353"/>
    <property type="project" value="ARUK-UCL"/>
</dbReference>
<dbReference type="GO" id="GO:0140857">
    <property type="term" value="F:histone H3T45 kinase activity"/>
    <property type="evidence" value="ECO:0000314"/>
    <property type="project" value="GO_Central"/>
</dbReference>
<dbReference type="GO" id="GO:0042802">
    <property type="term" value="F:identical protein binding"/>
    <property type="evidence" value="ECO:0000353"/>
    <property type="project" value="IntAct"/>
</dbReference>
<dbReference type="GO" id="GO:0004715">
    <property type="term" value="F:non-membrane spanning protein tyrosine kinase activity"/>
    <property type="evidence" value="ECO:0000314"/>
    <property type="project" value="MGI"/>
</dbReference>
<dbReference type="GO" id="GO:0004672">
    <property type="term" value="F:protein kinase activity"/>
    <property type="evidence" value="ECO:0000304"/>
    <property type="project" value="ProtInc"/>
</dbReference>
<dbReference type="GO" id="GO:0106310">
    <property type="term" value="F:protein serine kinase activity"/>
    <property type="evidence" value="ECO:0000314"/>
    <property type="project" value="ARUK-UCL"/>
</dbReference>
<dbReference type="GO" id="GO:0004674">
    <property type="term" value="F:protein serine/threonine kinase activity"/>
    <property type="evidence" value="ECO:0000316"/>
    <property type="project" value="ARUK-UCL"/>
</dbReference>
<dbReference type="GO" id="GO:0004712">
    <property type="term" value="F:protein serine/threonine/tyrosine kinase activity"/>
    <property type="evidence" value="ECO:0007669"/>
    <property type="project" value="UniProtKB-EC"/>
</dbReference>
<dbReference type="GO" id="GO:0004713">
    <property type="term" value="F:protein tyrosine kinase activity"/>
    <property type="evidence" value="ECO:0000250"/>
    <property type="project" value="UniProtKB"/>
</dbReference>
<dbReference type="GO" id="GO:0008353">
    <property type="term" value="F:RNA polymerase II CTD heptapeptide repeat kinase activity"/>
    <property type="evidence" value="ECO:0000314"/>
    <property type="project" value="UniProtKB"/>
</dbReference>
<dbReference type="GO" id="GO:1990935">
    <property type="term" value="F:splicing factor binding"/>
    <property type="evidence" value="ECO:0000250"/>
    <property type="project" value="ARUK-UCL"/>
</dbReference>
<dbReference type="GO" id="GO:0048156">
    <property type="term" value="F:tau protein binding"/>
    <property type="evidence" value="ECO:0000353"/>
    <property type="project" value="ARUK-UCL"/>
</dbReference>
<dbReference type="GO" id="GO:0050321">
    <property type="term" value="F:tau-protein kinase activity"/>
    <property type="evidence" value="ECO:0000303"/>
    <property type="project" value="ARUK-UCL"/>
</dbReference>
<dbReference type="GO" id="GO:0003713">
    <property type="term" value="F:transcription coactivator activity"/>
    <property type="evidence" value="ECO:0000318"/>
    <property type="project" value="GO_Central"/>
</dbReference>
<dbReference type="GO" id="GO:0015631">
    <property type="term" value="F:tubulin binding"/>
    <property type="evidence" value="ECO:0000353"/>
    <property type="project" value="ARUK-UCL"/>
</dbReference>
<dbReference type="GO" id="GO:0007623">
    <property type="term" value="P:circadian rhythm"/>
    <property type="evidence" value="ECO:0000250"/>
    <property type="project" value="UniProtKB"/>
</dbReference>
<dbReference type="GO" id="GO:0043518">
    <property type="term" value="P:negative regulation of DNA damage response, signal transduction by p53 class mediator"/>
    <property type="evidence" value="ECO:0000250"/>
    <property type="project" value="BHF-UCL"/>
</dbReference>
<dbReference type="GO" id="GO:0031452">
    <property type="term" value="P:negative regulation of heterochromatin formation"/>
    <property type="evidence" value="ECO:0000314"/>
    <property type="project" value="GO_Central"/>
</dbReference>
<dbReference type="GO" id="GO:0031115">
    <property type="term" value="P:negative regulation of microtubule polymerization"/>
    <property type="evidence" value="ECO:0000250"/>
    <property type="project" value="ARUK-UCL"/>
</dbReference>
<dbReference type="GO" id="GO:0048025">
    <property type="term" value="P:negative regulation of mRNA splicing, via spliceosome"/>
    <property type="evidence" value="ECO:0007669"/>
    <property type="project" value="Ensembl"/>
</dbReference>
<dbReference type="GO" id="GO:0007399">
    <property type="term" value="P:nervous system development"/>
    <property type="evidence" value="ECO:0000304"/>
    <property type="project" value="ProtInc"/>
</dbReference>
<dbReference type="GO" id="GO:0018108">
    <property type="term" value="P:peptidyl-tyrosine phosphorylation"/>
    <property type="evidence" value="ECO:0000314"/>
    <property type="project" value="MGI"/>
</dbReference>
<dbReference type="GO" id="GO:0045893">
    <property type="term" value="P:positive regulation of DNA-templated transcription"/>
    <property type="evidence" value="ECO:0000318"/>
    <property type="project" value="GO_Central"/>
</dbReference>
<dbReference type="GO" id="GO:0033120">
    <property type="term" value="P:positive regulation of RNA splicing"/>
    <property type="evidence" value="ECO:0000314"/>
    <property type="project" value="ARUK-UCL"/>
</dbReference>
<dbReference type="GO" id="GO:0046777">
    <property type="term" value="P:protein autophosphorylation"/>
    <property type="evidence" value="ECO:0000250"/>
    <property type="project" value="UniProtKB"/>
</dbReference>
<dbReference type="GO" id="GO:0006468">
    <property type="term" value="P:protein phosphorylation"/>
    <property type="evidence" value="ECO:0000250"/>
    <property type="project" value="UniProtKB"/>
</dbReference>
<dbReference type="GO" id="GO:0000381">
    <property type="term" value="P:regulation of alternative mRNA splicing, via spliceosome"/>
    <property type="evidence" value="ECO:0000250"/>
    <property type="project" value="ARUK-UCL"/>
</dbReference>
<dbReference type="GO" id="GO:1902003">
    <property type="term" value="P:regulation of amyloid-beta formation"/>
    <property type="evidence" value="ECO:0000315"/>
    <property type="project" value="ARUK-UCL"/>
</dbReference>
<dbReference type="GO" id="GO:1902996">
    <property type="term" value="P:regulation of neurofibrillary tangle assembly"/>
    <property type="evidence" value="ECO:0000314"/>
    <property type="project" value="ARUK-UCL"/>
</dbReference>
<dbReference type="CDD" id="cd14226">
    <property type="entry name" value="PKc_DYRK1"/>
    <property type="match status" value="1"/>
</dbReference>
<dbReference type="FunFam" id="3.30.200.20:FF:000087">
    <property type="entry name" value="Dual specificity tyrosine-phosphorylation-regulated kinase 1A"/>
    <property type="match status" value="1"/>
</dbReference>
<dbReference type="FunFam" id="1.10.510.10:FF:000264">
    <property type="entry name" value="dual specificity tyrosine-phosphorylation-regulated kinase 1B isoform X3"/>
    <property type="match status" value="1"/>
</dbReference>
<dbReference type="Gene3D" id="3.30.200.20">
    <property type="entry name" value="Phosphorylase Kinase, domain 1"/>
    <property type="match status" value="1"/>
</dbReference>
<dbReference type="Gene3D" id="1.10.510.10">
    <property type="entry name" value="Transferase(Phosphotransferase) domain 1"/>
    <property type="match status" value="1"/>
</dbReference>
<dbReference type="InterPro" id="IPR011009">
    <property type="entry name" value="Kinase-like_dom_sf"/>
</dbReference>
<dbReference type="InterPro" id="IPR044131">
    <property type="entry name" value="PKc_DYR1A/1B"/>
</dbReference>
<dbReference type="InterPro" id="IPR000719">
    <property type="entry name" value="Prot_kinase_dom"/>
</dbReference>
<dbReference type="InterPro" id="IPR017441">
    <property type="entry name" value="Protein_kinase_ATP_BS"/>
</dbReference>
<dbReference type="InterPro" id="IPR008271">
    <property type="entry name" value="Ser/Thr_kinase_AS"/>
</dbReference>
<dbReference type="InterPro" id="IPR050494">
    <property type="entry name" value="Ser_Thr_dual-spec_kinase"/>
</dbReference>
<dbReference type="PANTHER" id="PTHR24058">
    <property type="entry name" value="DUAL SPECIFICITY PROTEIN KINASE"/>
    <property type="match status" value="1"/>
</dbReference>
<dbReference type="PANTHER" id="PTHR24058:SF121">
    <property type="entry name" value="DUAL SPECIFICITY TYROSINE-PHOSPHORYLATION-REGULATED KINASE 1A"/>
    <property type="match status" value="1"/>
</dbReference>
<dbReference type="Pfam" id="PF00069">
    <property type="entry name" value="Pkinase"/>
    <property type="match status" value="1"/>
</dbReference>
<dbReference type="SMART" id="SM00220">
    <property type="entry name" value="S_TKc"/>
    <property type="match status" value="1"/>
</dbReference>
<dbReference type="SUPFAM" id="SSF56112">
    <property type="entry name" value="Protein kinase-like (PK-like)"/>
    <property type="match status" value="1"/>
</dbReference>
<dbReference type="PROSITE" id="PS00107">
    <property type="entry name" value="PROTEIN_KINASE_ATP"/>
    <property type="match status" value="1"/>
</dbReference>
<dbReference type="PROSITE" id="PS50011">
    <property type="entry name" value="PROTEIN_KINASE_DOM"/>
    <property type="match status" value="1"/>
</dbReference>
<dbReference type="PROSITE" id="PS00108">
    <property type="entry name" value="PROTEIN_KINASE_ST"/>
    <property type="match status" value="1"/>
</dbReference>
<name>DYR1A_HUMAN</name>
<accession>Q13627</accession>
<accession>O60769</accession>
<accession>Q92582</accession>
<accession>Q92810</accession>
<accession>Q9UNM5</accession>
<proteinExistence type="evidence at protein level"/>